<keyword id="KW-0002">3D-structure</keyword>
<keyword id="KW-0007">Acetylation</keyword>
<keyword id="KW-0025">Alternative splicing</keyword>
<keyword id="KW-1003">Cell membrane</keyword>
<keyword id="KW-0160">Chromosomal rearrangement</keyword>
<keyword id="KW-0963">Cytoplasm</keyword>
<keyword id="KW-0945">Host-virus interaction</keyword>
<keyword id="KW-1017">Isopeptide bond</keyword>
<keyword id="KW-0472">Membrane</keyword>
<keyword id="KW-0539">Nucleus</keyword>
<keyword id="KW-0597">Phosphoprotein</keyword>
<keyword id="KW-1267">Proteomics identification</keyword>
<keyword id="KW-1185">Reference proteome</keyword>
<keyword id="KW-0832">Ubl conjugation</keyword>
<keyword id="KW-0833">Ubl conjugation pathway</keyword>
<proteinExistence type="evidence at protein level"/>
<organism>
    <name type="scientific">Homo sapiens</name>
    <name type="common">Human</name>
    <dbReference type="NCBI Taxonomy" id="9606"/>
    <lineage>
        <taxon>Eukaryota</taxon>
        <taxon>Metazoa</taxon>
        <taxon>Chordata</taxon>
        <taxon>Craniata</taxon>
        <taxon>Vertebrata</taxon>
        <taxon>Euteleostomi</taxon>
        <taxon>Mammalia</taxon>
        <taxon>Eutheria</taxon>
        <taxon>Euarchontoglires</taxon>
        <taxon>Primates</taxon>
        <taxon>Haplorrhini</taxon>
        <taxon>Catarrhini</taxon>
        <taxon>Hominidae</taxon>
        <taxon>Homo</taxon>
    </lineage>
</organism>
<reference key="1">
    <citation type="journal article" date="1997" name="Genomics">
        <title>SMT3A, a human homologue of the S. cerevisiae SMT3 gene, maps to chromosome 21qter and defines a novel gene family.</title>
        <authorList>
            <person name="Lapenta V."/>
            <person name="Chiurazzi P."/>
            <person name="van der Spek P.J."/>
            <person name="Pizzuti A."/>
            <person name="Hanaoka F."/>
            <person name="Brahe C."/>
        </authorList>
    </citation>
    <scope>NUCLEOTIDE SEQUENCE [MRNA] (ISOFORM 1)</scope>
    <source>
        <tissue>Brain</tissue>
    </source>
</reference>
<reference key="2">
    <citation type="journal article" date="1996" name="Oncogene">
        <title>PIC 1, a novel ubiquitin-like protein which interacts with the PML component of a multiprotein complex that is disrupted in acute promyelocytic leukaemia.</title>
        <authorList>
            <person name="Boddy M.N."/>
            <person name="Howe K."/>
            <person name="Etkin L.D."/>
            <person name="Solomon E."/>
            <person name="Freemont P.S."/>
        </authorList>
    </citation>
    <scope>NUCLEOTIDE SEQUENCE [MRNA] (ISOFORM 1)</scope>
    <source>
        <tissue>Brain</tissue>
        <tissue>Placenta</tissue>
    </source>
</reference>
<reference key="3">
    <citation type="journal article" date="1996" name="Genomics">
        <title>UBL1, a human ubiquitin-like protein associating with human RAD51/RAD52 proteins.</title>
        <authorList>
            <person name="Shen Z."/>
            <person name="Pardington-Purtymun P.E."/>
            <person name="Comeaux J.C."/>
            <person name="Moyzis R.K."/>
            <person name="Chen D.J."/>
        </authorList>
    </citation>
    <scope>NUCLEOTIDE SEQUENCE [MRNA] (ISOFORM 1)</scope>
</reference>
<reference key="4">
    <citation type="journal article" date="1997" name="Cell">
        <title>A small ubiquitin-related polypeptide involved in targeting RanGAP1 to nuclear pore complex protein RanBP2.</title>
        <authorList>
            <person name="Mahajan R."/>
            <person name="Delphin C."/>
            <person name="Guan T."/>
            <person name="Gerace L."/>
            <person name="Melchior F."/>
        </authorList>
    </citation>
    <scope>NUCLEOTIDE SEQUENCE [MRNA] (ISOFORM 1)</scope>
    <scope>FUNCTION</scope>
</reference>
<reference key="5">
    <citation type="journal article" date="1996" name="J. Cell Biol.">
        <title>A novel ubiquitin-like modification modulates the partitioning of the Ran-GTPase-activating protein RanGAP1 between the cytosol and the nuclear pore complex.</title>
        <authorList>
            <person name="Matunis M.J."/>
            <person name="Coutavas E."/>
            <person name="Blobel G."/>
        </authorList>
    </citation>
    <scope>NUCLEOTIDE SEQUENCE [MRNA] (ISOFORM 1)</scope>
</reference>
<reference key="6">
    <citation type="journal article" date="1996" name="J. Immunol.">
        <title>Protection against Fas/APO-1- and tumor necrosis factor-mediated cell death by a novel protein, sentrin.</title>
        <authorList>
            <person name="Okura T."/>
            <person name="Gong L."/>
            <person name="Kamitani T."/>
            <person name="Wada T."/>
            <person name="Okura I."/>
            <person name="Wei C.F."/>
            <person name="Chang H.M."/>
            <person name="Yeh E.T.H."/>
        </authorList>
    </citation>
    <scope>NUCLEOTIDE SEQUENCE [MRNA] (ISOFORM 1)</scope>
    <source>
        <tissue>Placenta</tissue>
    </source>
</reference>
<reference key="7">
    <citation type="submission" date="2001-05" db="EMBL/GenBank/DDBJ databases">
        <title>Identification of immuno-peptidmics that are recognized by tumor-reactive CTL generated from TIL of colon cancer patients.</title>
        <authorList>
            <person name="Shichijo S."/>
            <person name="Itoh K."/>
        </authorList>
    </citation>
    <scope>NUCLEOTIDE SEQUENCE [LARGE SCALE MRNA] (ISOFORM 1)</scope>
    <source>
        <tissue>Colon adenocarcinoma</tissue>
    </source>
</reference>
<reference key="8">
    <citation type="submission" date="2003-05" db="EMBL/GenBank/DDBJ databases">
        <title>Cloning of human full-length CDSs in BD Creator(TM) system donor vector.</title>
        <authorList>
            <person name="Kalnine N."/>
            <person name="Chen X."/>
            <person name="Rolfs A."/>
            <person name="Halleck A."/>
            <person name="Hines L."/>
            <person name="Eisenstein S."/>
            <person name="Koundinya M."/>
            <person name="Raphael J."/>
            <person name="Moreira D."/>
            <person name="Kelley T."/>
            <person name="LaBaer J."/>
            <person name="Lin Y."/>
            <person name="Phelan M."/>
            <person name="Farmer A."/>
        </authorList>
    </citation>
    <scope>NUCLEOTIDE SEQUENCE [LARGE SCALE MRNA] (ISOFORM 1)</scope>
</reference>
<reference key="9">
    <citation type="submission" date="2004-06" db="EMBL/GenBank/DDBJ databases">
        <title>Cloning of human full open reading frames in Gateway(TM) system entry vector (pDONR201).</title>
        <authorList>
            <person name="Ebert L."/>
            <person name="Schick M."/>
            <person name="Neubert P."/>
            <person name="Schatten R."/>
            <person name="Henze S."/>
            <person name="Korn B."/>
        </authorList>
    </citation>
    <scope>NUCLEOTIDE SEQUENCE [LARGE SCALE MRNA] (ISOFORM 1)</scope>
</reference>
<reference key="10">
    <citation type="journal article" date="2004" name="Nat. Genet.">
        <title>Complete sequencing and characterization of 21,243 full-length human cDNAs.</title>
        <authorList>
            <person name="Ota T."/>
            <person name="Suzuki Y."/>
            <person name="Nishikawa T."/>
            <person name="Otsuki T."/>
            <person name="Sugiyama T."/>
            <person name="Irie R."/>
            <person name="Wakamatsu A."/>
            <person name="Hayashi K."/>
            <person name="Sato H."/>
            <person name="Nagai K."/>
            <person name="Kimura K."/>
            <person name="Makita H."/>
            <person name="Sekine M."/>
            <person name="Obayashi M."/>
            <person name="Nishi T."/>
            <person name="Shibahara T."/>
            <person name="Tanaka T."/>
            <person name="Ishii S."/>
            <person name="Yamamoto J."/>
            <person name="Saito K."/>
            <person name="Kawai Y."/>
            <person name="Isono Y."/>
            <person name="Nakamura Y."/>
            <person name="Nagahari K."/>
            <person name="Murakami K."/>
            <person name="Yasuda T."/>
            <person name="Iwayanagi T."/>
            <person name="Wagatsuma M."/>
            <person name="Shiratori A."/>
            <person name="Sudo H."/>
            <person name="Hosoiri T."/>
            <person name="Kaku Y."/>
            <person name="Kodaira H."/>
            <person name="Kondo H."/>
            <person name="Sugawara M."/>
            <person name="Takahashi M."/>
            <person name="Kanda K."/>
            <person name="Yokoi T."/>
            <person name="Furuya T."/>
            <person name="Kikkawa E."/>
            <person name="Omura Y."/>
            <person name="Abe K."/>
            <person name="Kamihara K."/>
            <person name="Katsuta N."/>
            <person name="Sato K."/>
            <person name="Tanikawa M."/>
            <person name="Yamazaki M."/>
            <person name="Ninomiya K."/>
            <person name="Ishibashi T."/>
            <person name="Yamashita H."/>
            <person name="Murakawa K."/>
            <person name="Fujimori K."/>
            <person name="Tanai H."/>
            <person name="Kimata M."/>
            <person name="Watanabe M."/>
            <person name="Hiraoka S."/>
            <person name="Chiba Y."/>
            <person name="Ishida S."/>
            <person name="Ono Y."/>
            <person name="Takiguchi S."/>
            <person name="Watanabe S."/>
            <person name="Yosida M."/>
            <person name="Hotuta T."/>
            <person name="Kusano J."/>
            <person name="Kanehori K."/>
            <person name="Takahashi-Fujii A."/>
            <person name="Hara H."/>
            <person name="Tanase T.-O."/>
            <person name="Nomura Y."/>
            <person name="Togiya S."/>
            <person name="Komai F."/>
            <person name="Hara R."/>
            <person name="Takeuchi K."/>
            <person name="Arita M."/>
            <person name="Imose N."/>
            <person name="Musashino K."/>
            <person name="Yuuki H."/>
            <person name="Oshima A."/>
            <person name="Sasaki N."/>
            <person name="Aotsuka S."/>
            <person name="Yoshikawa Y."/>
            <person name="Matsunawa H."/>
            <person name="Ichihara T."/>
            <person name="Shiohata N."/>
            <person name="Sano S."/>
            <person name="Moriya S."/>
            <person name="Momiyama H."/>
            <person name="Satoh N."/>
            <person name="Takami S."/>
            <person name="Terashima Y."/>
            <person name="Suzuki O."/>
            <person name="Nakagawa S."/>
            <person name="Senoh A."/>
            <person name="Mizoguchi H."/>
            <person name="Goto Y."/>
            <person name="Shimizu F."/>
            <person name="Wakebe H."/>
            <person name="Hishigaki H."/>
            <person name="Watanabe T."/>
            <person name="Sugiyama A."/>
            <person name="Takemoto M."/>
            <person name="Kawakami B."/>
            <person name="Yamazaki M."/>
            <person name="Watanabe K."/>
            <person name="Kumagai A."/>
            <person name="Itakura S."/>
            <person name="Fukuzumi Y."/>
            <person name="Fujimori Y."/>
            <person name="Komiyama M."/>
            <person name="Tashiro H."/>
            <person name="Tanigami A."/>
            <person name="Fujiwara T."/>
            <person name="Ono T."/>
            <person name="Yamada K."/>
            <person name="Fujii Y."/>
            <person name="Ozaki K."/>
            <person name="Hirao M."/>
            <person name="Ohmori Y."/>
            <person name="Kawabata A."/>
            <person name="Hikiji T."/>
            <person name="Kobatake N."/>
            <person name="Inagaki H."/>
            <person name="Ikema Y."/>
            <person name="Okamoto S."/>
            <person name="Okitani R."/>
            <person name="Kawakami T."/>
            <person name="Noguchi S."/>
            <person name="Itoh T."/>
            <person name="Shigeta K."/>
            <person name="Senba T."/>
            <person name="Matsumura K."/>
            <person name="Nakajima Y."/>
            <person name="Mizuno T."/>
            <person name="Morinaga M."/>
            <person name="Sasaki M."/>
            <person name="Togashi T."/>
            <person name="Oyama M."/>
            <person name="Hata H."/>
            <person name="Watanabe M."/>
            <person name="Komatsu T."/>
            <person name="Mizushima-Sugano J."/>
            <person name="Satoh T."/>
            <person name="Shirai Y."/>
            <person name="Takahashi Y."/>
            <person name="Nakagawa K."/>
            <person name="Okumura K."/>
            <person name="Nagase T."/>
            <person name="Nomura N."/>
            <person name="Kikuchi H."/>
            <person name="Masuho Y."/>
            <person name="Yamashita R."/>
            <person name="Nakai K."/>
            <person name="Yada T."/>
            <person name="Nakamura Y."/>
            <person name="Ohara O."/>
            <person name="Isogai T."/>
            <person name="Sugano S."/>
        </authorList>
    </citation>
    <scope>NUCLEOTIDE SEQUENCE [LARGE SCALE MRNA] (ISOFORM 1)</scope>
    <source>
        <tissue>Amygdala</tissue>
    </source>
</reference>
<reference key="11">
    <citation type="journal article" date="2005" name="Nature">
        <title>Generation and annotation of the DNA sequences of human chromosomes 2 and 4.</title>
        <authorList>
            <person name="Hillier L.W."/>
            <person name="Graves T.A."/>
            <person name="Fulton R.S."/>
            <person name="Fulton L.A."/>
            <person name="Pepin K.H."/>
            <person name="Minx P."/>
            <person name="Wagner-McPherson C."/>
            <person name="Layman D."/>
            <person name="Wylie K."/>
            <person name="Sekhon M."/>
            <person name="Becker M.C."/>
            <person name="Fewell G.A."/>
            <person name="Delehaunty K.D."/>
            <person name="Miner T.L."/>
            <person name="Nash W.E."/>
            <person name="Kremitzki C."/>
            <person name="Oddy L."/>
            <person name="Du H."/>
            <person name="Sun H."/>
            <person name="Bradshaw-Cordum H."/>
            <person name="Ali J."/>
            <person name="Carter J."/>
            <person name="Cordes M."/>
            <person name="Harris A."/>
            <person name="Isak A."/>
            <person name="van Brunt A."/>
            <person name="Nguyen C."/>
            <person name="Du F."/>
            <person name="Courtney L."/>
            <person name="Kalicki J."/>
            <person name="Ozersky P."/>
            <person name="Abbott S."/>
            <person name="Armstrong J."/>
            <person name="Belter E.A."/>
            <person name="Caruso L."/>
            <person name="Cedroni M."/>
            <person name="Cotton M."/>
            <person name="Davidson T."/>
            <person name="Desai A."/>
            <person name="Elliott G."/>
            <person name="Erb T."/>
            <person name="Fronick C."/>
            <person name="Gaige T."/>
            <person name="Haakenson W."/>
            <person name="Haglund K."/>
            <person name="Holmes A."/>
            <person name="Harkins R."/>
            <person name="Kim K."/>
            <person name="Kruchowski S.S."/>
            <person name="Strong C.M."/>
            <person name="Grewal N."/>
            <person name="Goyea E."/>
            <person name="Hou S."/>
            <person name="Levy A."/>
            <person name="Martinka S."/>
            <person name="Mead K."/>
            <person name="McLellan M.D."/>
            <person name="Meyer R."/>
            <person name="Randall-Maher J."/>
            <person name="Tomlinson C."/>
            <person name="Dauphin-Kohlberg S."/>
            <person name="Kozlowicz-Reilly A."/>
            <person name="Shah N."/>
            <person name="Swearengen-Shahid S."/>
            <person name="Snider J."/>
            <person name="Strong J.T."/>
            <person name="Thompson J."/>
            <person name="Yoakum M."/>
            <person name="Leonard S."/>
            <person name="Pearman C."/>
            <person name="Trani L."/>
            <person name="Radionenko M."/>
            <person name="Waligorski J.E."/>
            <person name="Wang C."/>
            <person name="Rock S.M."/>
            <person name="Tin-Wollam A.-M."/>
            <person name="Maupin R."/>
            <person name="Latreille P."/>
            <person name="Wendl M.C."/>
            <person name="Yang S.-P."/>
            <person name="Pohl C."/>
            <person name="Wallis J.W."/>
            <person name="Spieth J."/>
            <person name="Bieri T.A."/>
            <person name="Berkowicz N."/>
            <person name="Nelson J.O."/>
            <person name="Osborne J."/>
            <person name="Ding L."/>
            <person name="Meyer R."/>
            <person name="Sabo A."/>
            <person name="Shotland Y."/>
            <person name="Sinha P."/>
            <person name="Wohldmann P.E."/>
            <person name="Cook L.L."/>
            <person name="Hickenbotham M.T."/>
            <person name="Eldred J."/>
            <person name="Williams D."/>
            <person name="Jones T.A."/>
            <person name="She X."/>
            <person name="Ciccarelli F.D."/>
            <person name="Izaurralde E."/>
            <person name="Taylor J."/>
            <person name="Schmutz J."/>
            <person name="Myers R.M."/>
            <person name="Cox D.R."/>
            <person name="Huang X."/>
            <person name="McPherson J.D."/>
            <person name="Mardis E.R."/>
            <person name="Clifton S.W."/>
            <person name="Warren W.C."/>
            <person name="Chinwalla A.T."/>
            <person name="Eddy S.R."/>
            <person name="Marra M.A."/>
            <person name="Ovcharenko I."/>
            <person name="Furey T.S."/>
            <person name="Miller W."/>
            <person name="Eichler E.E."/>
            <person name="Bork P."/>
            <person name="Suyama M."/>
            <person name="Torrents D."/>
            <person name="Waterston R.H."/>
            <person name="Wilson R.K."/>
        </authorList>
    </citation>
    <scope>NUCLEOTIDE SEQUENCE [LARGE SCALE GENOMIC DNA]</scope>
</reference>
<reference key="12">
    <citation type="submission" date="2005-07" db="EMBL/GenBank/DDBJ databases">
        <authorList>
            <person name="Mural R.J."/>
            <person name="Istrail S."/>
            <person name="Sutton G.G."/>
            <person name="Florea L."/>
            <person name="Halpern A.L."/>
            <person name="Mobarry C.M."/>
            <person name="Lippert R."/>
            <person name="Walenz B."/>
            <person name="Shatkay H."/>
            <person name="Dew I."/>
            <person name="Miller J.R."/>
            <person name="Flanigan M.J."/>
            <person name="Edwards N.J."/>
            <person name="Bolanos R."/>
            <person name="Fasulo D."/>
            <person name="Halldorsson B.V."/>
            <person name="Hannenhalli S."/>
            <person name="Turner R."/>
            <person name="Yooseph S."/>
            <person name="Lu F."/>
            <person name="Nusskern D.R."/>
            <person name="Shue B.C."/>
            <person name="Zheng X.H."/>
            <person name="Zhong F."/>
            <person name="Delcher A.L."/>
            <person name="Huson D.H."/>
            <person name="Kravitz S.A."/>
            <person name="Mouchard L."/>
            <person name="Reinert K."/>
            <person name="Remington K.A."/>
            <person name="Clark A.G."/>
            <person name="Waterman M.S."/>
            <person name="Eichler E.E."/>
            <person name="Adams M.D."/>
            <person name="Hunkapiller M.W."/>
            <person name="Myers E.W."/>
            <person name="Venter J.C."/>
        </authorList>
    </citation>
    <scope>NUCLEOTIDE SEQUENCE [LARGE SCALE GENOMIC DNA]</scope>
</reference>
<reference key="13">
    <citation type="journal article" date="2004" name="Genome Res.">
        <title>The status, quality, and expansion of the NIH full-length cDNA project: the Mammalian Gene Collection (MGC).</title>
        <authorList>
            <consortium name="The MGC Project Team"/>
        </authorList>
    </citation>
    <scope>NUCLEOTIDE SEQUENCE [LARGE SCALE MRNA] (ISOFORM 1)</scope>
    <source>
        <tissue>Placenta</tissue>
    </source>
</reference>
<reference key="14">
    <citation type="journal article" date="1997" name="J. Biol. Chem.">
        <title>Preferential modification of nuclear proteins by a novel ubiquitin-like molecule.</title>
        <authorList>
            <person name="Kamitani T."/>
            <person name="Nguyen H.P."/>
            <person name="Yeh E.T.H."/>
        </authorList>
    </citation>
    <scope>FUNCTION</scope>
    <scope>SUBCELLULAR LOCATION</scope>
    <scope>PROTEOLYTIC CLEAVAGE</scope>
</reference>
<reference key="15">
    <citation type="journal article" date="1999" name="J. Cell Sci.">
        <title>Cell cycle regulation of PML modification and ND10 composition.</title>
        <authorList>
            <person name="Everett R.D."/>
            <person name="Lomonte P."/>
            <person name="Sternsdorf T."/>
            <person name="van Driel R."/>
            <person name="Orr A."/>
        </authorList>
    </citation>
    <scope>SUBCELLULAR LOCATION</scope>
</reference>
<reference key="16">
    <citation type="journal article" date="2000" name="J. Biol. Chem.">
        <title>Covalent modification of p73alpha by SUMO-1. Two-hybrid screening with p73 identifies novel SUMO-1-interacting proteins and a SUMO-1 interaction motif.</title>
        <authorList>
            <person name="Minty A."/>
            <person name="Dumont X."/>
            <person name="Kaghad M."/>
            <person name="Caput D."/>
        </authorList>
    </citation>
    <scope>INTERACTION WITH HIPK3; CHD3; PIAS1; EXOSC9 AND TDG</scope>
</reference>
<reference key="17">
    <citation type="journal article" date="2002" name="Gene">
        <title>Molecular features of human ubiquitin-like SUMO genes and their encoded proteins.</title>
        <authorList>
            <person name="Su H.-L."/>
            <person name="Li S.S.-L."/>
        </authorList>
    </citation>
    <scope>SUBCELLULAR LOCATION</scope>
</reference>
<reference key="18">
    <citation type="journal article" date="2003" name="Biochemistry">
        <title>Role of an N-terminal site of Ubc9 in SUMO-1, -2, and -3 binding and conjugation.</title>
        <authorList>
            <person name="Tatham M.H."/>
            <person name="Kim S."/>
            <person name="Yu B."/>
            <person name="Jaffray E."/>
            <person name="Song J."/>
            <person name="Zheng J."/>
            <person name="Rodriguez M.S."/>
            <person name="Hay R.T."/>
            <person name="Chen Y."/>
        </authorList>
    </citation>
    <scope>INTERACTION WITH UBE2I</scope>
</reference>
<reference key="19">
    <citation type="journal article" date="2003" name="Exp. Cell Res.">
        <title>The homeodomain-interacting kinase PKM (HIPK-2) modifies ND10 through both its kinase domain and a SUMO-1 interaction motif and alters the posttranslational modification of PML.</title>
        <authorList>
            <person name="Engelhardt O.G."/>
            <person name="Boutell C."/>
            <person name="Orr A."/>
            <person name="Ullrich E."/>
            <person name="Haller O."/>
            <person name="Everett R.D."/>
        </authorList>
    </citation>
    <scope>INTERACTION WITH HIPK2</scope>
</reference>
<reference key="20">
    <citation type="journal article" date="2003" name="Virus Res.">
        <title>Non-covalent interaction between nucleocapsid protein of Tula hantavirus and small ubiquitin-related modifier-1, SUMO-1.</title>
        <authorList>
            <person name="Kaukinen P."/>
            <person name="Vaheri A."/>
            <person name="Plyusnin A."/>
        </authorList>
    </citation>
    <scope>INTERACTION WITH TULA HANTAVIRUS (MICROBIAL INFECTION)</scope>
</reference>
<reference key="21">
    <citation type="journal article" date="2003" name="Virology">
        <title>The intracellular association of the nucleocapsid protein (NP) of hantaan virus (HTNV) with small ubiquitin-like modifier-1 (SUMO-1) conjugating enzyme 9 (Ubc9).</title>
        <authorList>
            <person name="Maeda A."/>
            <person name="Lee B.H."/>
            <person name="Yoshimatsu K."/>
            <person name="Saijo M."/>
            <person name="Kurane I."/>
            <person name="Arikawa J."/>
            <person name="Morikawa S."/>
        </authorList>
    </citation>
    <scope>INTERACTION WITH HANTAAN HANTAVIRUS NUCLEOPROTEIN (MICROBIAL INFECTION)</scope>
</reference>
<reference key="22">
    <citation type="journal article" date="2005" name="Biochem. J.">
        <title>Mapping residues of SUMO precursors essential in differential maturation by SUMO-specific protease, SENP1.</title>
        <authorList>
            <person name="Xu Z."/>
            <person name="Au S.W.N."/>
        </authorList>
    </citation>
    <scope>CLEAVAGE</scope>
</reference>
<reference key="23">
    <citation type="journal article" date="2005" name="Nat. Struct. Mol. Biol.">
        <title>Unique binding interactions among Ubc9, SUMO and RanBP2 reveal a mechanism for SUMO paralog selection.</title>
        <authorList>
            <person name="Tatham M.H."/>
            <person name="Kim S."/>
            <person name="Jaffray E."/>
            <person name="Song J."/>
            <person name="Chen Y."/>
            <person name="Hay R.T."/>
        </authorList>
    </citation>
    <scope>INTERACTION WITH RANBP2</scope>
</reference>
<reference key="24">
    <citation type="journal article" date="2006" name="Cell">
        <title>Global, in vivo, and site-specific phosphorylation dynamics in signaling networks.</title>
        <authorList>
            <person name="Olsen J.V."/>
            <person name="Blagoev B."/>
            <person name="Gnad F."/>
            <person name="Macek B."/>
            <person name="Kumar C."/>
            <person name="Mortensen P."/>
            <person name="Mann M."/>
        </authorList>
    </citation>
    <scope>PHOSPHORYLATION [LARGE SCALE ANALYSIS] AT SER-2</scope>
    <scope>IDENTIFICATION BY MASS SPECTROMETRY [LARGE SCALE ANALYSIS]</scope>
    <source>
        <tissue>Cervix carcinoma</tissue>
    </source>
</reference>
<reference key="25">
    <citation type="journal article" date="2006" name="J. Neurosci. Res.">
        <title>Functional modulation of parkin through physical interaction with SUMO-1.</title>
        <authorList>
            <person name="Um J.W."/>
            <person name="Chung K.C."/>
        </authorList>
    </citation>
    <scope>INTERACTION WITH PRKN</scope>
</reference>
<reference key="26">
    <citation type="journal article" date="2006" name="Science">
        <title>SUMO1 haploinsufficiency leads to cleft lip and palate.</title>
        <authorList>
            <person name="Alkuraya F.S."/>
            <person name="Saadi I."/>
            <person name="Lund J.J."/>
            <person name="Turbe-Doan A."/>
            <person name="Morton C.C."/>
            <person name="Maas R.L."/>
        </authorList>
    </citation>
    <scope>CHROMOSOMAL TRANSLOCATION</scope>
    <scope>INVOLVEMENT IN OFC10</scope>
</reference>
<reference key="27">
    <citation type="journal article" date="2007" name="Cell">
        <title>RSUME, a small RWD-containing protein, enhances SUMO conjugation and stabilizes HIF-1alpha during hypoxia.</title>
        <authorList>
            <person name="Carbia-Nagashima A."/>
            <person name="Gerez J."/>
            <person name="Perez-Castro C."/>
            <person name="Paez-Pereda M."/>
            <person name="Silberstein S."/>
            <person name="Stalla G.K."/>
            <person name="Holsboer F."/>
            <person name="Arzt E."/>
        </authorList>
    </citation>
    <scope>INTERACTION WITH UBE2I AND RWDD3</scope>
</reference>
<reference key="28">
    <citation type="journal article" date="2008" name="J. Proteome Res.">
        <title>Phosphorylation of SUMO-1 occurs in vivo and is conserved through evolution.</title>
        <authorList>
            <person name="Matic I."/>
            <person name="Macek B."/>
            <person name="Hilger M."/>
            <person name="Walther T.C."/>
            <person name="Mann M."/>
        </authorList>
    </citation>
    <scope>PHOSPHORYLATION AT SER-2</scope>
</reference>
<reference key="29">
    <citation type="journal article" date="2008" name="Mol. Cell">
        <title>Mechanism and consequences for paralog-specific sumoylation of ubiquitin-specific protease 25.</title>
        <authorList>
            <person name="Meulmeester E."/>
            <person name="Kunze M."/>
            <person name="Hsiao H.H."/>
            <person name="Urlaub H."/>
            <person name="Melchior F."/>
        </authorList>
    </citation>
    <scope>FUNCTION IN SUMOYLATION OF USP25</scope>
    <scope>INTERACTION WITH USP25</scope>
</reference>
<reference key="30">
    <citation type="journal article" date="2008" name="Mol. Cell">
        <title>Kinase-selective enrichment enables quantitative phosphoproteomics of the kinome across the cell cycle.</title>
        <authorList>
            <person name="Daub H."/>
            <person name="Olsen J.V."/>
            <person name="Bairlein M."/>
            <person name="Gnad F."/>
            <person name="Oppermann F.S."/>
            <person name="Korner R."/>
            <person name="Greff Z."/>
            <person name="Keri G."/>
            <person name="Stemmann O."/>
            <person name="Mann M."/>
        </authorList>
    </citation>
    <scope>PHOSPHORYLATION [LARGE SCALE ANALYSIS] AT SER-2</scope>
    <scope>IDENTIFICATION BY MASS SPECTROMETRY [LARGE SCALE ANALYSIS]</scope>
    <source>
        <tissue>Cervix carcinoma</tissue>
    </source>
</reference>
<reference key="31">
    <citation type="journal article" date="2008" name="Nat. Cell Biol.">
        <title>RNF4 is a poly-SUMO-specific E3 ubiquitin ligase required for arsenic-induced PML degradation.</title>
        <authorList>
            <person name="Tatham M.H."/>
            <person name="Geoffroy M.C."/>
            <person name="Shen L."/>
            <person name="Plechanovova A."/>
            <person name="Hattersley N."/>
            <person name="Jaffray E.G."/>
            <person name="Palvimo J.J."/>
            <person name="Hay R.T."/>
        </authorList>
    </citation>
    <scope>FUNCTION</scope>
    <scope>UBIQUITINATION</scope>
</reference>
<reference key="32">
    <citation type="journal article" date="2009" name="Anal. Chem.">
        <title>Lys-N and trypsin cover complementary parts of the phosphoproteome in a refined SCX-based approach.</title>
        <authorList>
            <person name="Gauci S."/>
            <person name="Helbig A.O."/>
            <person name="Slijper M."/>
            <person name="Krijgsveld J."/>
            <person name="Heck A.J."/>
            <person name="Mohammed S."/>
        </authorList>
    </citation>
    <scope>ACETYLATION [LARGE SCALE ANALYSIS] AT SER-2</scope>
    <scope>CLEAVAGE OF INITIATOR METHIONINE [LARGE SCALE ANALYSIS]</scope>
    <scope>IDENTIFICATION BY MASS SPECTROMETRY [LARGE SCALE ANALYSIS]</scope>
</reference>
<reference key="33">
    <citation type="journal article" date="2009" name="J. Cell Sci.">
        <title>SUMOylation regulates Kv2.1 and modulates pancreatic beta-cell excitability.</title>
        <authorList>
            <person name="Dai X.Q."/>
            <person name="Kolic J."/>
            <person name="Marchi P."/>
            <person name="Sipione S."/>
            <person name="Macdonald P.E."/>
        </authorList>
    </citation>
    <scope>FUNCTION IN KCNB1 SUMOYLATION</scope>
    <scope>INTERACTION WITH KCNB1</scope>
    <scope>SUBCELLULAR LOCATION</scope>
</reference>
<reference key="34">
    <citation type="journal article" date="2010" name="J. Biol. Chem.">
        <title>In vivo identification of sumoylation sites by a signature tag and cysteine-targeted affinity purification.</title>
        <authorList>
            <person name="Blomster H.A."/>
            <person name="Imanishi S.Y."/>
            <person name="Siimes J."/>
            <person name="Kastu J."/>
            <person name="Morrice N.A."/>
            <person name="Eriksson J.E."/>
            <person name="Sistonen L."/>
        </authorList>
    </citation>
    <scope>SUMOYLATION AT LYS-7 AND LYS-25</scope>
    <scope>ACETYLATION AT SER-2</scope>
    <source>
        <tissue>Cervix carcinoma</tissue>
    </source>
</reference>
<reference key="35">
    <citation type="journal article" date="2010" name="Sci. Signal.">
        <title>Quantitative phosphoproteomics reveals widespread full phosphorylation site occupancy during mitosis.</title>
        <authorList>
            <person name="Olsen J.V."/>
            <person name="Vermeulen M."/>
            <person name="Santamaria A."/>
            <person name="Kumar C."/>
            <person name="Miller M.L."/>
            <person name="Jensen L.J."/>
            <person name="Gnad F."/>
            <person name="Cox J."/>
            <person name="Jensen T.S."/>
            <person name="Nigg E.A."/>
            <person name="Brunak S."/>
            <person name="Mann M."/>
        </authorList>
    </citation>
    <scope>ACETYLATION [LARGE SCALE ANALYSIS] AT SER-2</scope>
    <scope>PHOSPHORYLATION [LARGE SCALE ANALYSIS] AT SER-2 AND SER-9</scope>
    <scope>CLEAVAGE OF INITIATOR METHIONINE [LARGE SCALE ANALYSIS]</scope>
    <scope>IDENTIFICATION BY MASS SPECTROMETRY [LARGE SCALE ANALYSIS]</scope>
    <source>
        <tissue>Cervix carcinoma</tissue>
    </source>
</reference>
<reference key="36">
    <citation type="journal article" date="2011" name="BMC Syst. Biol.">
        <title>Initial characterization of the human central proteome.</title>
        <authorList>
            <person name="Burkard T.R."/>
            <person name="Planyavsky M."/>
            <person name="Kaupe I."/>
            <person name="Breitwieser F.P."/>
            <person name="Buerckstuemmer T."/>
            <person name="Bennett K.L."/>
            <person name="Superti-Furga G."/>
            <person name="Colinge J."/>
        </authorList>
    </citation>
    <scope>IDENTIFICATION BY MASS SPECTROMETRY [LARGE SCALE ANALYSIS]</scope>
</reference>
<reference key="37">
    <citation type="journal article" date="2011" name="J. Biol. Chem.">
        <title>SUMOylation and SUMO-interacting motif (SIM) of metastasis tumor antigen 1 (MTA1) synergistically regulate its transcriptional repressor function.</title>
        <authorList>
            <person name="Cong L."/>
            <person name="Pakala S.B."/>
            <person name="Ohshiro K."/>
            <person name="Li D.Q."/>
            <person name="Kumar R."/>
        </authorList>
    </citation>
    <scope>FUNCTION</scope>
    <scope>INTERACTION WITH MTA1</scope>
</reference>
<reference key="38">
    <citation type="journal article" date="2011" name="PLoS ONE">
        <title>SUMOylation of DEC1 protein regulates its transcriptional activity and enhances its stability.</title>
        <authorList>
            <person name="Hong Y."/>
            <person name="Xing X."/>
            <person name="Li S."/>
            <person name="Bi H."/>
            <person name="Yang C."/>
            <person name="Zhao F."/>
            <person name="Liu Y."/>
            <person name="Ao X."/>
            <person name="Chang A.K."/>
            <person name="Wu H."/>
        </authorList>
    </citation>
    <scope>INTERACTION WITH BHLHE40/DEC1</scope>
</reference>
<reference key="39">
    <citation type="journal article" date="2011" name="Sci. Signal.">
        <title>System-wide temporal characterization of the proteome and phosphoproteome of human embryonic stem cell differentiation.</title>
        <authorList>
            <person name="Rigbolt K.T."/>
            <person name="Prokhorova T.A."/>
            <person name="Akimov V."/>
            <person name="Henningsen J."/>
            <person name="Johansen P.T."/>
            <person name="Kratchmarova I."/>
            <person name="Kassem M."/>
            <person name="Mann M."/>
            <person name="Olsen J.V."/>
            <person name="Blagoev B."/>
        </authorList>
    </citation>
    <scope>ACETYLATION [LARGE SCALE ANALYSIS] AT SER-2</scope>
    <scope>PHOSPHORYLATION [LARGE SCALE ANALYSIS] AT SER-2</scope>
    <scope>CLEAVAGE OF INITIATOR METHIONINE [LARGE SCALE ANALYSIS]</scope>
    <scope>IDENTIFICATION BY MASS SPECTROMETRY [LARGE SCALE ANALYSIS]</scope>
</reference>
<reference key="40">
    <citation type="journal article" date="2012" name="Cancer Res.">
        <title>The SUMO E3-ligase PIAS1 regulates the tumor suppressor PML and its oncogenic counterpart PML-RARA.</title>
        <authorList>
            <person name="Rabellino A."/>
            <person name="Carter B."/>
            <person name="Konstantinidou G."/>
            <person name="Wu S.Y."/>
            <person name="Rimessi A."/>
            <person name="Byers L.A."/>
            <person name="Heymach J.V."/>
            <person name="Girard L."/>
            <person name="Chiang C.M."/>
            <person name="Teruya-Feldstein J."/>
            <person name="Scaglioni P.P."/>
        </authorList>
    </citation>
    <scope>SUBCELLULAR LOCATION</scope>
</reference>
<reference key="41">
    <citation type="journal article" date="2012" name="J. Biol. Chem.">
        <title>PolySUMO-binding proteins identified through a string search.</title>
        <authorList>
            <person name="Sun H."/>
            <person name="Hunter T."/>
        </authorList>
    </citation>
    <scope>IDENTIFICATION OF REPEAT SUMO-INTERACTING MOTIF</scope>
    <scope>INTERACTION WITH SIMC1; CASP8AP2; RNF111 AND SOBP</scope>
</reference>
<reference key="42">
    <citation type="journal article" date="2012" name="J. Virol.">
        <title>SUMO binding by the Epstein-Barr virus protein kinase BGLF4 is crucial for BGLF4 function.</title>
        <authorList>
            <person name="Li R."/>
            <person name="Wang L."/>
            <person name="Liao G."/>
            <person name="Guzzo C.M."/>
            <person name="Matunis M.J."/>
            <person name="Zhu H."/>
            <person name="Hayward S.D."/>
        </authorList>
    </citation>
    <scope>INTERACTION WITH EPSTEIN-BARR VIRUS BGLF4 (MICROBIAL INFECTION)</scope>
</reference>
<reference key="43">
    <citation type="journal article" date="2013" name="J. Proteome Res.">
        <title>Toward a comprehensive characterization of a human cancer cell phosphoproteome.</title>
        <authorList>
            <person name="Zhou H."/>
            <person name="Di Palma S."/>
            <person name="Preisinger C."/>
            <person name="Peng M."/>
            <person name="Polat A.N."/>
            <person name="Heck A.J."/>
            <person name="Mohammed S."/>
        </authorList>
    </citation>
    <scope>PHOSPHORYLATION [LARGE SCALE ANALYSIS] AT SER-2 AND SER-32</scope>
    <scope>IDENTIFICATION BY MASS SPECTROMETRY [LARGE SCALE ANALYSIS]</scope>
    <source>
        <tissue>Cervix carcinoma</tissue>
        <tissue>Erythroleukemia</tissue>
    </source>
</reference>
<reference key="44">
    <citation type="journal article" date="2014" name="J. Proteomics">
        <title>An enzyme assisted RP-RPLC approach for in-depth analysis of human liver phosphoproteome.</title>
        <authorList>
            <person name="Bian Y."/>
            <person name="Song C."/>
            <person name="Cheng K."/>
            <person name="Dong M."/>
            <person name="Wang F."/>
            <person name="Huang J."/>
            <person name="Sun D."/>
            <person name="Wang L."/>
            <person name="Ye M."/>
            <person name="Zou H."/>
        </authorList>
    </citation>
    <scope>IDENTIFICATION BY MASS SPECTROMETRY [LARGE SCALE ANALYSIS]</scope>
    <source>
        <tissue>Liver</tissue>
    </source>
</reference>
<reference key="45">
    <citation type="journal article" date="2014" name="Nat. Struct. Mol. Biol.">
        <title>Uncovering global SUMOylation signaling networks in a site-specific manner.</title>
        <authorList>
            <person name="Hendriks I.A."/>
            <person name="D'Souza R.C."/>
            <person name="Yang B."/>
            <person name="Verlaan-de Vries M."/>
            <person name="Mann M."/>
            <person name="Vertegaal A.C."/>
        </authorList>
    </citation>
    <scope>SUMOYLATION [LARGE SCALE ANALYSIS] AT LYS-7; LYS-16 AND LYS-17</scope>
    <scope>IDENTIFICATION BY MASS SPECTROMETRY [LARGE SCALE ANALYSIS]</scope>
</reference>
<reference key="46">
    <citation type="journal article" date="2014" name="PLoS ONE">
        <title>Characterization of nuclear localization and SUMOylation of the ATBF1 transcription factor in epithelial cells.</title>
        <authorList>
            <person name="Sun X."/>
            <person name="Li J."/>
            <person name="Dong F.N."/>
            <person name="Dong J.T."/>
        </authorList>
    </citation>
    <scope>FUNCTION</scope>
    <scope>SUBCELLULAR LOCATION</scope>
</reference>
<reference key="47">
    <citation type="journal article" date="2015" name="Cell Rep.">
        <title>SUMO-2 orchestrates chromatin modifiers in response to DNA damage.</title>
        <authorList>
            <person name="Hendriks I.A."/>
            <person name="Treffers L.W."/>
            <person name="Verlaan-de Vries M."/>
            <person name="Olsen J.V."/>
            <person name="Vertegaal A.C."/>
        </authorList>
    </citation>
    <scope>SUMOYLATION [LARGE SCALE ANALYSIS] AT LYS-7 AND LYS-17</scope>
    <scope>IDENTIFICATION BY MASS SPECTROMETRY [LARGE SCALE ANALYSIS]</scope>
</reference>
<reference key="48">
    <citation type="journal article" date="2015" name="Mol. Cell. Proteomics">
        <title>System-wide analysis of SUMOylation dynamics in response to replication stress reveals novel small ubiquitin-like modified target proteins and acceptor lysines relevant for genome stability.</title>
        <authorList>
            <person name="Xiao Z."/>
            <person name="Chang J.G."/>
            <person name="Hendriks I.A."/>
            <person name="Sigurdsson J.O."/>
            <person name="Olsen J.V."/>
            <person name="Vertegaal A.C."/>
        </authorList>
    </citation>
    <scope>SUMOYLATION [LARGE SCALE ANALYSIS] AT LYS-7 AND LYS-37</scope>
    <scope>IDENTIFICATION BY MASS SPECTROMETRY [LARGE SCALE ANALYSIS]</scope>
</reference>
<reference key="49">
    <citation type="journal article" date="2016" name="J. Biol. Chem.">
        <title>Transcription Factor hDREF Is a Novel SUMO E3 Ligase of Mi2alpha.</title>
        <authorList>
            <person name="Yamashita D."/>
            <person name="Moriuchi T."/>
            <person name="Osumi T."/>
            <person name="Hirose F."/>
        </authorList>
    </citation>
    <scope>MUTAGENESIS OF GLY-97</scope>
</reference>
<reference key="50">
    <citation type="journal article" date="2017" name="Nat. Struct. Mol. Biol.">
        <title>Site-specific mapping of the human SUMO proteome reveals co-modification with phosphorylation.</title>
        <authorList>
            <person name="Hendriks I.A."/>
            <person name="Lyon D."/>
            <person name="Young C."/>
            <person name="Jensen L.J."/>
            <person name="Vertegaal A.C."/>
            <person name="Nielsen M.L."/>
        </authorList>
    </citation>
    <scope>SUMOYLATION [LARGE SCALE ANALYSIS] AT LYS-7; LYS-16; LYS-17; LYS-23; LYS-37; LYS-39; LYS-45 AND LYS-46</scope>
    <scope>IDENTIFICATION BY MASS SPECTROMETRY [LARGE SCALE ANALYSIS]</scope>
</reference>
<reference key="51">
    <citation type="journal article" date="1998" name="J. Mol. Biol.">
        <title>Structure determination of the small ubiquitin-related modifier SUMO-1.</title>
        <authorList>
            <person name="Bayer P."/>
            <person name="Arndt A."/>
            <person name="Metzger S."/>
            <person name="Mahajan R."/>
            <person name="Melchior F."/>
            <person name="Jaenicke R."/>
            <person name="Becker J."/>
        </authorList>
    </citation>
    <scope>STRUCTURE BY NMR</scope>
</reference>
<reference key="52">
    <citation type="journal article" date="2004" name="Structure">
        <title>A basis for SUMO protease specificity provided by analysis of human Senp2 and a Senp2-SUMO complex.</title>
        <authorList>
            <person name="Reverter D."/>
            <person name="Lima C.D."/>
        </authorList>
    </citation>
    <scope>X-RAY CRYSTALLOGRAPHY (2.8 ANGSTROMS) OF 18-97 IN COMPLEX WITH SENP2</scope>
    <scope>CLEAVAGE</scope>
</reference>
<reference key="53">
    <citation type="journal article" date="2005" name="EMBO J.">
        <title>Structures of the SUMO E1 provide mechanistic insights into SUMO activation and E2 recruitment to E1.</title>
        <authorList>
            <person name="Lois L.M."/>
            <person name="Lima C.D."/>
        </authorList>
    </citation>
    <scope>X-RAY CRYSTALLOGRAPHY (2.75 ANGSTROMS) OF 1-97 IN COMPLEX WITH SAE1; SAE2 AND ATP</scope>
</reference>
<reference key="54">
    <citation type="journal article" date="2005" name="J. Biol. Chem.">
        <title>Small ubiquitin-like modifier (SUMO) recognition of a SUMO binding motif: a reversal of the bound orientation.</title>
        <authorList>
            <person name="Song J."/>
            <person name="Zhang Z."/>
            <person name="Hu W."/>
            <person name="Chen Y."/>
        </authorList>
    </citation>
    <scope>STRUCTURE BY NMR OF 1-97 IN COMPLEX WITH PIAS2</scope>
    <scope>MUTAGENESIS OF PHE-36</scope>
</reference>
<reference key="55">
    <citation type="journal article" date="2005" name="Nature">
        <title>Insights into E3 ligase activity revealed by a SUMO-RanGAP1-Ubc9-Nup358 complex.</title>
        <authorList>
            <person name="Reverter D."/>
            <person name="Lima C.D."/>
        </authorList>
    </citation>
    <scope>X-RAY CRYSTALLOGRAPHY (3.01 ANGSTROMS) OF 18-97 IN COMPLEX WITH UBE2I; RANGAP1 AND RANBP2</scope>
</reference>
<reference key="56">
    <citation type="journal article" date="2005" name="Nature">
        <title>Crystal structure of thymine DNA glycosylase conjugated to SUMO-1.</title>
        <authorList>
            <person name="Baba D."/>
            <person name="Maita N."/>
            <person name="Jee J.-G."/>
            <person name="Uchimura Y."/>
            <person name="Saitoh H."/>
            <person name="Sugasawa K."/>
            <person name="Hanaoka F."/>
            <person name="Tochio H."/>
            <person name="Hiroaki H."/>
            <person name="Shirakawa M."/>
        </authorList>
    </citation>
    <scope>X-RAY CRYSTALLOGRAPHY (2.1 ANGSTROMS) OF 1-97 CONJUGATED TO TDG</scope>
</reference>
<reference key="57">
    <citation type="journal article" date="2005" name="Nat. Struct. Mol. Biol.">
        <title>SUMO modification of the ubiquitin-conjugating enzyme E2-25K.</title>
        <authorList>
            <person name="Pichler A."/>
            <person name="Knipscheer P."/>
            <person name="Oberhofer E."/>
            <person name="van Dijk W.J."/>
            <person name="Koerner R."/>
            <person name="Olsen J.V."/>
            <person name="Jentsch S."/>
            <person name="Melchior F."/>
            <person name="Sixma T.K."/>
        </authorList>
    </citation>
    <scope>X-RAY CRYSTALLOGRAPHY (2.3 ANGSTROMS) OF 21-97 CONJUGATED TO HIP2</scope>
</reference>
<reference key="58">
    <citation type="journal article" date="2006" name="Biochem. J.">
        <title>Crystal structure of the SENP1 mutant C603S-SUMO complex reveals the hydrolytic mechanism of SUMO-specific protease.</title>
        <authorList>
            <person name="Xu Z."/>
            <person name="Chau S.F."/>
            <person name="Lam K.H."/>
            <person name="Chan H.Y."/>
            <person name="Ng T.B."/>
            <person name="Au S.W.N."/>
        </authorList>
    </citation>
    <scope>X-RAY CRYSTALLOGRAPHY (2.8 ANGSTROMS) IN COMPLEX WITH SENP1</scope>
</reference>
<reference key="59">
    <citation type="journal article" date="2006" name="Nat. Struct. Mol. Biol.">
        <title>SUMO protease SENP1 induces isomerization of the scissile peptide bond.</title>
        <authorList>
            <person name="Shen L."/>
            <person name="Tatham M.H."/>
            <person name="Dong C."/>
            <person name="Zagorska A."/>
            <person name="Naismith J.H."/>
            <person name="Hay R.T."/>
        </authorList>
    </citation>
    <scope>X-RAY CRYSTALLOGRAPHY (2.77 ANGSTROMS) IN COMPLEX WITH RANGAP1 AND SENP1</scope>
</reference>
<name>SUMO1_HUMAN</name>
<protein>
    <recommendedName>
        <fullName>Small ubiquitin-related modifier 1</fullName>
        <shortName>SUMO-1</shortName>
    </recommendedName>
    <alternativeName>
        <fullName>GAP-modifying protein 1</fullName>
        <shortName>GMP1</shortName>
    </alternativeName>
    <alternativeName>
        <fullName>SMT3 homolog 3</fullName>
    </alternativeName>
    <alternativeName>
        <fullName>Sentrin</fullName>
    </alternativeName>
    <alternativeName>
        <fullName>Ubiquitin-homology domain protein PIC1</fullName>
    </alternativeName>
    <alternativeName>
        <fullName>Ubiquitin-like protein SMT3C</fullName>
        <shortName>Smt3C</shortName>
    </alternativeName>
    <alternativeName>
        <fullName>Ubiquitin-like protein UBL1</fullName>
    </alternativeName>
</protein>
<dbReference type="EMBL" id="X99586">
    <property type="protein sequence ID" value="CAA67898.1"/>
    <property type="molecule type" value="mRNA"/>
</dbReference>
<dbReference type="EMBL" id="U61397">
    <property type="protein sequence ID" value="AAB40388.1"/>
    <property type="molecule type" value="mRNA"/>
</dbReference>
<dbReference type="EMBL" id="U38784">
    <property type="protein sequence ID" value="AAC50733.1"/>
    <property type="molecule type" value="mRNA"/>
</dbReference>
<dbReference type="EMBL" id="U67122">
    <property type="protein sequence ID" value="AAC50996.1"/>
    <property type="molecule type" value="mRNA"/>
</dbReference>
<dbReference type="EMBL" id="U72722">
    <property type="protein sequence ID" value="AAB40390.1"/>
    <property type="molecule type" value="mRNA"/>
</dbReference>
<dbReference type="EMBL" id="U83117">
    <property type="protein sequence ID" value="AAB39999.1"/>
    <property type="molecule type" value="mRNA"/>
</dbReference>
<dbReference type="EMBL" id="AB062294">
    <property type="protein sequence ID" value="BAB93477.1"/>
    <property type="molecule type" value="mRNA"/>
</dbReference>
<dbReference type="EMBL" id="BT006632">
    <property type="protein sequence ID" value="AAP35278.1"/>
    <property type="molecule type" value="mRNA"/>
</dbReference>
<dbReference type="EMBL" id="CR542147">
    <property type="protein sequence ID" value="CAG46944.1"/>
    <property type="molecule type" value="mRNA"/>
</dbReference>
<dbReference type="EMBL" id="CR542156">
    <property type="protein sequence ID" value="CAG46953.1"/>
    <property type="molecule type" value="mRNA"/>
</dbReference>
<dbReference type="EMBL" id="AK311840">
    <property type="protein sequence ID" value="BAG34782.1"/>
    <property type="molecule type" value="mRNA"/>
</dbReference>
<dbReference type="EMBL" id="AC079354">
    <property type="protein sequence ID" value="AAY24035.1"/>
    <property type="molecule type" value="Genomic_DNA"/>
</dbReference>
<dbReference type="EMBL" id="CH471063">
    <property type="protein sequence ID" value="EAW70304.1"/>
    <property type="molecule type" value="Genomic_DNA"/>
</dbReference>
<dbReference type="EMBL" id="CH471063">
    <property type="protein sequence ID" value="EAW70307.1"/>
    <property type="molecule type" value="Genomic_DNA"/>
</dbReference>
<dbReference type="EMBL" id="BC006462">
    <property type="protein sequence ID" value="AAH06462.1"/>
    <property type="molecule type" value="mRNA"/>
</dbReference>
<dbReference type="EMBL" id="BC053528">
    <property type="protein sequence ID" value="AAH53528.1"/>
    <property type="molecule type" value="mRNA"/>
</dbReference>
<dbReference type="EMBL" id="BC066306">
    <property type="protein sequence ID" value="AAH66306.1"/>
    <property type="molecule type" value="mRNA"/>
</dbReference>
<dbReference type="CCDS" id="CCDS2352.1">
    <molecule id="P63165-1"/>
</dbReference>
<dbReference type="CCDS" id="CCDS46493.1">
    <molecule id="P63165-2"/>
</dbReference>
<dbReference type="RefSeq" id="NP_001005781.1">
    <molecule id="P63165-1"/>
    <property type="nucleotide sequence ID" value="NM_001005781.2"/>
</dbReference>
<dbReference type="RefSeq" id="NP_001005782.1">
    <molecule id="P63165-2"/>
    <property type="nucleotide sequence ID" value="NM_001005782.2"/>
</dbReference>
<dbReference type="RefSeq" id="NP_003343.1">
    <molecule id="P63165-1"/>
    <property type="nucleotide sequence ID" value="NM_003352.8"/>
</dbReference>
<dbReference type="PDB" id="1A5R">
    <property type="method" value="NMR"/>
    <property type="chains" value="A=1-101"/>
</dbReference>
<dbReference type="PDB" id="1TGZ">
    <property type="method" value="X-ray"/>
    <property type="resolution" value="2.80 A"/>
    <property type="chains" value="B=18-97"/>
</dbReference>
<dbReference type="PDB" id="1WYW">
    <property type="method" value="X-ray"/>
    <property type="resolution" value="2.10 A"/>
    <property type="chains" value="B=1-97"/>
</dbReference>
<dbReference type="PDB" id="1Y8R">
    <property type="method" value="X-ray"/>
    <property type="resolution" value="2.75 A"/>
    <property type="chains" value="C/F=1-97"/>
</dbReference>
<dbReference type="PDB" id="1Z5S">
    <property type="method" value="X-ray"/>
    <property type="resolution" value="3.01 A"/>
    <property type="chains" value="B=18-97"/>
</dbReference>
<dbReference type="PDB" id="2ASQ">
    <property type="method" value="NMR"/>
    <property type="chains" value="A=1-97"/>
</dbReference>
<dbReference type="PDB" id="2BF8">
    <property type="method" value="X-ray"/>
    <property type="resolution" value="2.30 A"/>
    <property type="chains" value="B=21-97"/>
</dbReference>
<dbReference type="PDB" id="2G4D">
    <property type="method" value="X-ray"/>
    <property type="resolution" value="2.80 A"/>
    <property type="chains" value="B/D=20-97"/>
</dbReference>
<dbReference type="PDB" id="2IO2">
    <property type="method" value="X-ray"/>
    <property type="resolution" value="2.90 A"/>
    <property type="chains" value="B=18-97"/>
</dbReference>
<dbReference type="PDB" id="2IY0">
    <property type="method" value="X-ray"/>
    <property type="resolution" value="2.77 A"/>
    <property type="chains" value="B=20-101"/>
</dbReference>
<dbReference type="PDB" id="2IY1">
    <property type="method" value="X-ray"/>
    <property type="resolution" value="2.46 A"/>
    <property type="chains" value="B/D=20-101"/>
</dbReference>
<dbReference type="PDB" id="2KQS">
    <property type="method" value="NMR"/>
    <property type="chains" value="A=1-97"/>
</dbReference>
<dbReference type="PDB" id="2LAS">
    <property type="method" value="NMR"/>
    <property type="chains" value="A=1-101"/>
</dbReference>
<dbReference type="PDB" id="2MW5">
    <property type="method" value="NMR"/>
    <property type="chains" value="A=1-97"/>
</dbReference>
<dbReference type="PDB" id="2N1A">
    <property type="method" value="NMR"/>
    <property type="chains" value="A=1-101"/>
</dbReference>
<dbReference type="PDB" id="2N1V">
    <property type="method" value="NMR"/>
    <property type="chains" value="A=1-97"/>
</dbReference>
<dbReference type="PDB" id="2PE6">
    <property type="method" value="X-ray"/>
    <property type="resolution" value="2.40 A"/>
    <property type="chains" value="B=1-97"/>
</dbReference>
<dbReference type="PDB" id="2UYZ">
    <property type="method" value="X-ray"/>
    <property type="resolution" value="1.40 A"/>
    <property type="chains" value="B=20-97"/>
</dbReference>
<dbReference type="PDB" id="2VRR">
    <property type="method" value="X-ray"/>
    <property type="resolution" value="2.22 A"/>
    <property type="chains" value="B=20-97"/>
</dbReference>
<dbReference type="PDB" id="3KYC">
    <property type="method" value="X-ray"/>
    <property type="resolution" value="2.45 A"/>
    <property type="chains" value="D=1-97"/>
</dbReference>
<dbReference type="PDB" id="3KYD">
    <property type="method" value="X-ray"/>
    <property type="resolution" value="2.61 A"/>
    <property type="chains" value="D=1-94"/>
</dbReference>
<dbReference type="PDB" id="3RZW">
    <property type="method" value="X-ray"/>
    <property type="resolution" value="2.15 A"/>
    <property type="chains" value="C/D=1-97"/>
</dbReference>
<dbReference type="PDB" id="3UIP">
    <property type="method" value="X-ray"/>
    <property type="resolution" value="2.29 A"/>
    <property type="chains" value="B=18-97"/>
</dbReference>
<dbReference type="PDB" id="4WJN">
    <property type="method" value="X-ray"/>
    <property type="resolution" value="1.50 A"/>
    <property type="chains" value="A=17-97"/>
</dbReference>
<dbReference type="PDB" id="4WJO">
    <property type="method" value="X-ray"/>
    <property type="resolution" value="1.46 A"/>
    <property type="chains" value="A=17-97"/>
</dbReference>
<dbReference type="PDB" id="4WJP">
    <property type="method" value="X-ray"/>
    <property type="resolution" value="1.70 A"/>
    <property type="chains" value="A/C=17-97"/>
</dbReference>
<dbReference type="PDB" id="4WJQ">
    <property type="method" value="X-ray"/>
    <property type="resolution" value="1.35 A"/>
    <property type="chains" value="A/C=17-97"/>
</dbReference>
<dbReference type="PDB" id="5AEK">
    <property type="method" value="X-ray"/>
    <property type="resolution" value="3.00 A"/>
    <property type="chains" value="B/D/F/H/J/L/N/P/R/T/V/X=20-97"/>
</dbReference>
<dbReference type="PDB" id="5B7A">
    <property type="method" value="NMR"/>
    <property type="chains" value="A=1-97"/>
</dbReference>
<dbReference type="PDB" id="5ELJ">
    <property type="method" value="X-ray"/>
    <property type="resolution" value="1.98 A"/>
    <property type="chains" value="B=18-97"/>
</dbReference>
<dbReference type="PDB" id="5GHD">
    <property type="method" value="NMR"/>
    <property type="chains" value="A=1-97"/>
</dbReference>
<dbReference type="PDB" id="6EOP">
    <property type="method" value="X-ray"/>
    <property type="resolution" value="2.40 A"/>
    <property type="chains" value="D/E/F=61-68"/>
</dbReference>
<dbReference type="PDB" id="6EOT">
    <property type="method" value="X-ray"/>
    <property type="resolution" value="3.50 A"/>
    <property type="chains" value="C/E/F/H/J/L=61-68"/>
</dbReference>
<dbReference type="PDB" id="6J4I">
    <property type="method" value="NMR"/>
    <property type="chains" value="A=1-97"/>
</dbReference>
<dbReference type="PDB" id="6JXU">
    <property type="method" value="NMR"/>
    <property type="chains" value="A=1-101"/>
</dbReference>
<dbReference type="PDB" id="6JXV">
    <property type="method" value="NMR"/>
    <property type="chains" value="A=1-101"/>
</dbReference>
<dbReference type="PDB" id="6K5T">
    <property type="method" value="NMR"/>
    <property type="chains" value="A=21-97"/>
</dbReference>
<dbReference type="PDB" id="6TRW">
    <property type="method" value="X-ray"/>
    <property type="resolution" value="3.00 A"/>
    <property type="chains" value="D/E/F=61-75"/>
</dbReference>
<dbReference type="PDB" id="6UYO">
    <property type="method" value="X-ray"/>
    <property type="resolution" value="1.64 A"/>
    <property type="chains" value="A/C=17-97"/>
</dbReference>
<dbReference type="PDB" id="6UYP">
    <property type="method" value="X-ray"/>
    <property type="resolution" value="1.42 A"/>
    <property type="chains" value="A=17-97"/>
</dbReference>
<dbReference type="PDB" id="6UYQ">
    <property type="method" value="X-ray"/>
    <property type="resolution" value="1.50 A"/>
    <property type="chains" value="A=17-97"/>
</dbReference>
<dbReference type="PDB" id="6UYR">
    <property type="method" value="X-ray"/>
    <property type="resolution" value="1.30 A"/>
    <property type="chains" value="A=17-97"/>
</dbReference>
<dbReference type="PDB" id="6UYS">
    <property type="method" value="X-ray"/>
    <property type="resolution" value="1.59 A"/>
    <property type="chains" value="A/C=17-97"/>
</dbReference>
<dbReference type="PDB" id="6UYT">
    <property type="method" value="X-ray"/>
    <property type="resolution" value="1.66 A"/>
    <property type="chains" value="A=17-97"/>
</dbReference>
<dbReference type="PDB" id="6UYU">
    <property type="method" value="X-ray"/>
    <property type="resolution" value="1.66 A"/>
    <property type="chains" value="A/C=17-97"/>
</dbReference>
<dbReference type="PDB" id="6UYV">
    <property type="method" value="X-ray"/>
    <property type="resolution" value="1.40 A"/>
    <property type="chains" value="A=17-97"/>
</dbReference>
<dbReference type="PDB" id="6UYX">
    <property type="method" value="X-ray"/>
    <property type="resolution" value="1.70 A"/>
    <property type="chains" value="A/C=17-97"/>
</dbReference>
<dbReference type="PDB" id="6UYY">
    <property type="method" value="X-ray"/>
    <property type="resolution" value="1.60 A"/>
    <property type="chains" value="A=17-97"/>
</dbReference>
<dbReference type="PDB" id="6UYZ">
    <property type="method" value="X-ray"/>
    <property type="resolution" value="1.40 A"/>
    <property type="chains" value="A/C=17-97"/>
</dbReference>
<dbReference type="PDB" id="6V7P">
    <property type="method" value="X-ray"/>
    <property type="resolution" value="1.40 A"/>
    <property type="chains" value="A/C=17-97"/>
</dbReference>
<dbReference type="PDB" id="6V7Q">
    <property type="method" value="X-ray"/>
    <property type="resolution" value="1.35 A"/>
    <property type="chains" value="A/C=17-97"/>
</dbReference>
<dbReference type="PDB" id="6V7R">
    <property type="method" value="X-ray"/>
    <property type="resolution" value="1.55 A"/>
    <property type="chains" value="A/C=17-97"/>
</dbReference>
<dbReference type="PDB" id="6V7S">
    <property type="method" value="X-ray"/>
    <property type="resolution" value="1.47 A"/>
    <property type="chains" value="A/C=17-97"/>
</dbReference>
<dbReference type="PDB" id="6WW3">
    <property type="method" value="X-ray"/>
    <property type="resolution" value="2.10 A"/>
    <property type="chains" value="A/B=2-7"/>
</dbReference>
<dbReference type="PDB" id="6XOG">
    <property type="method" value="X-ray"/>
    <property type="resolution" value="1.98 A"/>
    <property type="chains" value="C=1-101"/>
</dbReference>
<dbReference type="PDB" id="6XOH">
    <property type="method" value="X-ray"/>
    <property type="resolution" value="2.23 A"/>
    <property type="chains" value="C=1-101"/>
</dbReference>
<dbReference type="PDB" id="6XOI">
    <property type="method" value="X-ray"/>
    <property type="resolution" value="2.00 A"/>
    <property type="chains" value="C=1-101"/>
</dbReference>
<dbReference type="PDB" id="8DJH">
    <property type="method" value="X-ray"/>
    <property type="resolution" value="1.77 A"/>
    <property type="chains" value="A=2-97"/>
</dbReference>
<dbReference type="PDB" id="8DJI">
    <property type="method" value="X-ray"/>
    <property type="resolution" value="1.97 A"/>
    <property type="chains" value="A=2-97"/>
</dbReference>
<dbReference type="PDB" id="8ODR">
    <property type="method" value="X-ray"/>
    <property type="resolution" value="2.85 A"/>
    <property type="chains" value="B=18-97"/>
</dbReference>
<dbReference type="PDB" id="9B62">
    <property type="method" value="EM"/>
    <property type="resolution" value="2.90 A"/>
    <property type="chains" value="D=1-97"/>
</dbReference>
<dbReference type="PDBsum" id="1A5R"/>
<dbReference type="PDBsum" id="1TGZ"/>
<dbReference type="PDBsum" id="1WYW"/>
<dbReference type="PDBsum" id="1Y8R"/>
<dbReference type="PDBsum" id="1Z5S"/>
<dbReference type="PDBsum" id="2ASQ"/>
<dbReference type="PDBsum" id="2BF8"/>
<dbReference type="PDBsum" id="2G4D"/>
<dbReference type="PDBsum" id="2IO2"/>
<dbReference type="PDBsum" id="2IY0"/>
<dbReference type="PDBsum" id="2IY1"/>
<dbReference type="PDBsum" id="2KQS"/>
<dbReference type="PDBsum" id="2LAS"/>
<dbReference type="PDBsum" id="2MW5"/>
<dbReference type="PDBsum" id="2N1A"/>
<dbReference type="PDBsum" id="2N1V"/>
<dbReference type="PDBsum" id="2PE6"/>
<dbReference type="PDBsum" id="2UYZ"/>
<dbReference type="PDBsum" id="2VRR"/>
<dbReference type="PDBsum" id="3KYC"/>
<dbReference type="PDBsum" id="3KYD"/>
<dbReference type="PDBsum" id="3RZW"/>
<dbReference type="PDBsum" id="3UIP"/>
<dbReference type="PDBsum" id="4WJN"/>
<dbReference type="PDBsum" id="4WJO"/>
<dbReference type="PDBsum" id="4WJP"/>
<dbReference type="PDBsum" id="4WJQ"/>
<dbReference type="PDBsum" id="5AEK"/>
<dbReference type="PDBsum" id="5B7A"/>
<dbReference type="PDBsum" id="5ELJ"/>
<dbReference type="PDBsum" id="5GHD"/>
<dbReference type="PDBsum" id="6EOP"/>
<dbReference type="PDBsum" id="6EOT"/>
<dbReference type="PDBsum" id="6J4I"/>
<dbReference type="PDBsum" id="6JXU"/>
<dbReference type="PDBsum" id="6JXV"/>
<dbReference type="PDBsum" id="6K5T"/>
<dbReference type="PDBsum" id="6TRW"/>
<dbReference type="PDBsum" id="6UYO"/>
<dbReference type="PDBsum" id="6UYP"/>
<dbReference type="PDBsum" id="6UYQ"/>
<dbReference type="PDBsum" id="6UYR"/>
<dbReference type="PDBsum" id="6UYS"/>
<dbReference type="PDBsum" id="6UYT"/>
<dbReference type="PDBsum" id="6UYU"/>
<dbReference type="PDBsum" id="6UYV"/>
<dbReference type="PDBsum" id="6UYX"/>
<dbReference type="PDBsum" id="6UYY"/>
<dbReference type="PDBsum" id="6UYZ"/>
<dbReference type="PDBsum" id="6V7P"/>
<dbReference type="PDBsum" id="6V7Q"/>
<dbReference type="PDBsum" id="6V7R"/>
<dbReference type="PDBsum" id="6V7S"/>
<dbReference type="PDBsum" id="6WW3"/>
<dbReference type="PDBsum" id="6XOG"/>
<dbReference type="PDBsum" id="6XOH"/>
<dbReference type="PDBsum" id="6XOI"/>
<dbReference type="PDBsum" id="8DJH"/>
<dbReference type="PDBsum" id="8DJI"/>
<dbReference type="PDBsum" id="8ODR"/>
<dbReference type="PDBsum" id="9B62"/>
<dbReference type="BMRB" id="P63165"/>
<dbReference type="EMDB" id="EMD-44235"/>
<dbReference type="EMDB" id="EMD-44236"/>
<dbReference type="EMDB" id="EMD-44237"/>
<dbReference type="EMDB" id="EMD-44238"/>
<dbReference type="EMDB" id="EMD-44239"/>
<dbReference type="EMDB" id="EMD-44240"/>
<dbReference type="EMDB" id="EMD-44241"/>
<dbReference type="EMDB" id="EMD-44242"/>
<dbReference type="EMDB" id="EMD-44243"/>
<dbReference type="SMR" id="P63165"/>
<dbReference type="BioGRID" id="113188">
    <property type="interactions" value="291"/>
</dbReference>
<dbReference type="CORUM" id="P63165"/>
<dbReference type="DIP" id="DIP-29080N"/>
<dbReference type="FunCoup" id="P63165">
    <property type="interactions" value="3302"/>
</dbReference>
<dbReference type="IntAct" id="P63165">
    <property type="interactions" value="230"/>
</dbReference>
<dbReference type="MINT" id="P63165"/>
<dbReference type="STRING" id="9606.ENSP00000376077"/>
<dbReference type="BindingDB" id="P63165"/>
<dbReference type="ChEMBL" id="CHEMBL2146296"/>
<dbReference type="MoonDB" id="P63165">
    <property type="type" value="Predicted"/>
</dbReference>
<dbReference type="GlyGen" id="P63165">
    <property type="glycosylation" value="2 sites, 1 N-linked glycan (1 site), 1 O-linked glycan (1 site)"/>
</dbReference>
<dbReference type="iPTMnet" id="P63165"/>
<dbReference type="MetOSite" id="P63165"/>
<dbReference type="PhosphoSitePlus" id="P63165"/>
<dbReference type="SwissPalm" id="P63165"/>
<dbReference type="BioMuta" id="SUMO1"/>
<dbReference type="DMDM" id="52783799"/>
<dbReference type="jPOST" id="P63165"/>
<dbReference type="MassIVE" id="P63165"/>
<dbReference type="PaxDb" id="9606-ENSP00000376077"/>
<dbReference type="PeptideAtlas" id="P63165"/>
<dbReference type="ProteomicsDB" id="2128"/>
<dbReference type="ProteomicsDB" id="57500">
    <molecule id="P63165-1"/>
</dbReference>
<dbReference type="Pumba" id="P63165"/>
<dbReference type="TopDownProteomics" id="P63165-1">
    <molecule id="P63165-1"/>
</dbReference>
<dbReference type="ABCD" id="P63165">
    <property type="antibodies" value="12 sequenced antibodies"/>
</dbReference>
<dbReference type="Antibodypedia" id="3793">
    <property type="antibodies" value="1189 antibodies from 46 providers"/>
</dbReference>
<dbReference type="DNASU" id="7341"/>
<dbReference type="Ensembl" id="ENST00000392244.7">
    <molecule id="P63165-2"/>
    <property type="protein sequence ID" value="ENSP00000376075.3"/>
    <property type="gene ID" value="ENSG00000116030.17"/>
</dbReference>
<dbReference type="Ensembl" id="ENST00000392245.5">
    <molecule id="P63165-1"/>
    <property type="protein sequence ID" value="ENSP00000376076.1"/>
    <property type="gene ID" value="ENSG00000116030.17"/>
</dbReference>
<dbReference type="Ensembl" id="ENST00000392246.7">
    <molecule id="P63165-1"/>
    <property type="protein sequence ID" value="ENSP00000376077.2"/>
    <property type="gene ID" value="ENSG00000116030.17"/>
</dbReference>
<dbReference type="GeneID" id="7341"/>
<dbReference type="KEGG" id="hsa:7341"/>
<dbReference type="MANE-Select" id="ENST00000392246.7">
    <property type="protein sequence ID" value="ENSP00000376077.2"/>
    <property type="RefSeq nucleotide sequence ID" value="NM_003352.8"/>
    <property type="RefSeq protein sequence ID" value="NP_003343.1"/>
</dbReference>
<dbReference type="UCSC" id="uc002uyz.2">
    <molecule id="P63165-1"/>
    <property type="organism name" value="human"/>
</dbReference>
<dbReference type="AGR" id="HGNC:12502"/>
<dbReference type="CTD" id="7341"/>
<dbReference type="DisGeNET" id="7341"/>
<dbReference type="GeneCards" id="SUMO1"/>
<dbReference type="HGNC" id="HGNC:12502">
    <property type="gene designation" value="SUMO1"/>
</dbReference>
<dbReference type="HPA" id="ENSG00000116030">
    <property type="expression patterns" value="Low tissue specificity"/>
</dbReference>
<dbReference type="MalaCards" id="SUMO1"/>
<dbReference type="MIM" id="601912">
    <property type="type" value="gene"/>
</dbReference>
<dbReference type="MIM" id="613705">
    <property type="type" value="phenotype"/>
</dbReference>
<dbReference type="neXtProt" id="NX_P63165"/>
<dbReference type="OpenTargets" id="ENSG00000116030"/>
<dbReference type="Orphanet" id="99798">
    <property type="disease" value="Oligodontia"/>
</dbReference>
<dbReference type="PharmGKB" id="PA37149"/>
<dbReference type="VEuPathDB" id="HostDB:ENSG00000116030"/>
<dbReference type="eggNOG" id="KOG1769">
    <property type="taxonomic scope" value="Eukaryota"/>
</dbReference>
<dbReference type="GeneTree" id="ENSGT00940000154319"/>
<dbReference type="HOGENOM" id="CLU_148322_0_0_1"/>
<dbReference type="InParanoid" id="P63165"/>
<dbReference type="OMA" id="DQSHAAR"/>
<dbReference type="OrthoDB" id="442921at2759"/>
<dbReference type="PAN-GO" id="P63165">
    <property type="GO annotations" value="5 GO annotations based on evolutionary models"/>
</dbReference>
<dbReference type="PhylomeDB" id="P63165"/>
<dbReference type="TreeFam" id="TF315116"/>
<dbReference type="BioCyc" id="MetaCyc:ENSG00000116030-MONOMER"/>
<dbReference type="PathwayCommons" id="P63165"/>
<dbReference type="Reactome" id="R-HSA-3065676">
    <property type="pathway name" value="SUMO is conjugated to E1 (UBA2:SAE1)"/>
</dbReference>
<dbReference type="Reactome" id="R-HSA-3065678">
    <property type="pathway name" value="SUMO is transferred from E1 to E2 (UBE2I, UBC9)"/>
</dbReference>
<dbReference type="Reactome" id="R-HSA-3065679">
    <property type="pathway name" value="SUMO is proteolytically processed"/>
</dbReference>
<dbReference type="Reactome" id="R-HSA-3108214">
    <property type="pathway name" value="SUMOylation of DNA damage response and repair proteins"/>
</dbReference>
<dbReference type="Reactome" id="R-HSA-3232118">
    <property type="pathway name" value="SUMOylation of transcription factors"/>
</dbReference>
<dbReference type="Reactome" id="R-HSA-3232142">
    <property type="pathway name" value="SUMOylation of ubiquitinylation proteins"/>
</dbReference>
<dbReference type="Reactome" id="R-HSA-3899300">
    <property type="pathway name" value="SUMOylation of transcription cofactors"/>
</dbReference>
<dbReference type="Reactome" id="R-HSA-4085377">
    <property type="pathway name" value="SUMOylation of SUMOylation proteins"/>
</dbReference>
<dbReference type="Reactome" id="R-HSA-4090294">
    <property type="pathway name" value="SUMOylation of intracellular receptors"/>
</dbReference>
<dbReference type="Reactome" id="R-HSA-4551638">
    <property type="pathway name" value="SUMOylation of chromatin organization proteins"/>
</dbReference>
<dbReference type="Reactome" id="R-HSA-4570464">
    <property type="pathway name" value="SUMOylation of RNA binding proteins"/>
</dbReference>
<dbReference type="Reactome" id="R-HSA-4615885">
    <property type="pathway name" value="SUMOylation of DNA replication proteins"/>
</dbReference>
<dbReference type="Reactome" id="R-HSA-4655427">
    <property type="pathway name" value="SUMOylation of DNA methylation proteins"/>
</dbReference>
<dbReference type="Reactome" id="R-HSA-4755510">
    <property type="pathway name" value="SUMOylation of immune response proteins"/>
</dbReference>
<dbReference type="Reactome" id="R-HSA-5693565">
    <property type="pathway name" value="Recruitment and ATM-mediated phosphorylation of repair and signaling proteins at DNA double strand breaks"/>
</dbReference>
<dbReference type="Reactome" id="R-HSA-5696395">
    <property type="pathway name" value="Formation of Incision Complex in GG-NER"/>
</dbReference>
<dbReference type="Reactome" id="R-HSA-877312">
    <property type="pathway name" value="Regulation of IFNG signaling"/>
</dbReference>
<dbReference type="Reactome" id="R-HSA-8866904">
    <property type="pathway name" value="Negative regulation of activity of TFAP2 (AP-2) family transcription factors"/>
</dbReference>
<dbReference type="Reactome" id="R-HSA-9615933">
    <property type="pathway name" value="Postmitotic nuclear pore complex (NPC) reformation"/>
</dbReference>
<dbReference type="Reactome" id="R-HSA-9683610">
    <property type="pathway name" value="Maturation of nucleoprotein"/>
</dbReference>
<dbReference type="Reactome" id="R-HSA-9694631">
    <property type="pathway name" value="Maturation of nucleoprotein"/>
</dbReference>
<dbReference type="Reactome" id="R-HSA-9793242">
    <property type="pathway name" value="SUMOylation of nuclear envelope proteins"/>
</dbReference>
<dbReference type="Reactome" id="R-HSA-9833482">
    <property type="pathway name" value="PKR-mediated signaling"/>
</dbReference>
<dbReference type="Reactome" id="R-HSA-9856649">
    <property type="pathway name" value="Transcriptional and post-translational regulation of MITF-M expression and activity"/>
</dbReference>
<dbReference type="SignaLink" id="P63165"/>
<dbReference type="SIGNOR" id="P63165"/>
<dbReference type="BioGRID-ORCS" id="7341">
    <property type="hits" value="49 hits in 1119 CRISPR screens"/>
</dbReference>
<dbReference type="CD-CODE" id="6F24707C">
    <property type="entry name" value="Cajal body"/>
</dbReference>
<dbReference type="CD-CODE" id="804901D1">
    <property type="entry name" value="Nuclear speckle"/>
</dbReference>
<dbReference type="CD-CODE" id="91857CE7">
    <property type="entry name" value="Nucleolus"/>
</dbReference>
<dbReference type="CD-CODE" id="B5B9A610">
    <property type="entry name" value="PML body"/>
</dbReference>
<dbReference type="ChiTaRS" id="SUMO1">
    <property type="organism name" value="human"/>
</dbReference>
<dbReference type="EvolutionaryTrace" id="P63165"/>
<dbReference type="GeneWiki" id="Small_ubiquitin-related_modifier_1"/>
<dbReference type="GenomeRNAi" id="7341"/>
<dbReference type="Pharos" id="P63165">
    <property type="development level" value="Tbio"/>
</dbReference>
<dbReference type="PRO" id="PR:P63165"/>
<dbReference type="Proteomes" id="UP000005640">
    <property type="component" value="Chromosome 2"/>
</dbReference>
<dbReference type="RNAct" id="P63165">
    <property type="molecule type" value="protein"/>
</dbReference>
<dbReference type="Bgee" id="ENSG00000116030">
    <property type="expression patterns" value="Expressed in ganglionic eminence and 180 other cell types or tissues"/>
</dbReference>
<dbReference type="ExpressionAtlas" id="P63165">
    <property type="expression patterns" value="baseline and differential"/>
</dbReference>
<dbReference type="GO" id="GO:0005829">
    <property type="term" value="C:cytosol"/>
    <property type="evidence" value="ECO:0000304"/>
    <property type="project" value="Reactome"/>
</dbReference>
<dbReference type="GO" id="GO:0098978">
    <property type="term" value="C:glutamatergic synapse"/>
    <property type="evidence" value="ECO:0007669"/>
    <property type="project" value="Ensembl"/>
</dbReference>
<dbReference type="GO" id="GO:0016604">
    <property type="term" value="C:nuclear body"/>
    <property type="evidence" value="ECO:0000314"/>
    <property type="project" value="HPA"/>
</dbReference>
<dbReference type="GO" id="GO:0031965">
    <property type="term" value="C:nuclear membrane"/>
    <property type="evidence" value="ECO:0000314"/>
    <property type="project" value="HPA"/>
</dbReference>
<dbReference type="GO" id="GO:0005643">
    <property type="term" value="C:nuclear pore"/>
    <property type="evidence" value="ECO:0000304"/>
    <property type="project" value="ProtInc"/>
</dbReference>
<dbReference type="GO" id="GO:0016607">
    <property type="term" value="C:nuclear speck"/>
    <property type="evidence" value="ECO:0007669"/>
    <property type="project" value="UniProtKB-SubCell"/>
</dbReference>
<dbReference type="GO" id="GO:0097165">
    <property type="term" value="C:nuclear stress granule"/>
    <property type="evidence" value="ECO:0000314"/>
    <property type="project" value="UniProtKB"/>
</dbReference>
<dbReference type="GO" id="GO:0005730">
    <property type="term" value="C:nucleolus"/>
    <property type="evidence" value="ECO:0000314"/>
    <property type="project" value="HPA"/>
</dbReference>
<dbReference type="GO" id="GO:0005654">
    <property type="term" value="C:nucleoplasm"/>
    <property type="evidence" value="ECO:0000314"/>
    <property type="project" value="HPA"/>
</dbReference>
<dbReference type="GO" id="GO:0005634">
    <property type="term" value="C:nucleus"/>
    <property type="evidence" value="ECO:0000314"/>
    <property type="project" value="UniProtKB"/>
</dbReference>
<dbReference type="GO" id="GO:0005886">
    <property type="term" value="C:plasma membrane"/>
    <property type="evidence" value="ECO:0000314"/>
    <property type="project" value="UniProtKB"/>
</dbReference>
<dbReference type="GO" id="GO:0016605">
    <property type="term" value="C:PML body"/>
    <property type="evidence" value="ECO:0000314"/>
    <property type="project" value="UniProtKB"/>
</dbReference>
<dbReference type="GO" id="GO:0099524">
    <property type="term" value="C:postsynaptic cytosol"/>
    <property type="evidence" value="ECO:0007669"/>
    <property type="project" value="Ensembl"/>
</dbReference>
<dbReference type="GO" id="GO:0099523">
    <property type="term" value="C:presynaptic cytosol"/>
    <property type="evidence" value="ECO:0007669"/>
    <property type="project" value="Ensembl"/>
</dbReference>
<dbReference type="GO" id="GO:0001741">
    <property type="term" value="C:XY body"/>
    <property type="evidence" value="ECO:0007669"/>
    <property type="project" value="Ensembl"/>
</dbReference>
<dbReference type="GO" id="GO:0019899">
    <property type="term" value="F:enzyme binding"/>
    <property type="evidence" value="ECO:0000353"/>
    <property type="project" value="CAFA"/>
</dbReference>
<dbReference type="GO" id="GO:0015459">
    <property type="term" value="F:potassium channel regulator activity"/>
    <property type="evidence" value="ECO:0000314"/>
    <property type="project" value="UniProtKB"/>
</dbReference>
<dbReference type="GO" id="GO:0031386">
    <property type="term" value="F:protein tag activity"/>
    <property type="evidence" value="ECO:0000314"/>
    <property type="project" value="UniProtKB"/>
</dbReference>
<dbReference type="GO" id="GO:0003723">
    <property type="term" value="F:RNA binding"/>
    <property type="evidence" value="ECO:0007005"/>
    <property type="project" value="UniProtKB"/>
</dbReference>
<dbReference type="GO" id="GO:0044388">
    <property type="term" value="F:small protein activating enzyme binding"/>
    <property type="evidence" value="ECO:0000353"/>
    <property type="project" value="CAFA"/>
</dbReference>
<dbReference type="GO" id="GO:0008134">
    <property type="term" value="F:transcription factor binding"/>
    <property type="evidence" value="ECO:0000250"/>
    <property type="project" value="AgBase"/>
</dbReference>
<dbReference type="GO" id="GO:0141109">
    <property type="term" value="F:transporter activator activity"/>
    <property type="evidence" value="ECO:0000250"/>
    <property type="project" value="BHF-UCL"/>
</dbReference>
<dbReference type="GO" id="GO:0031625">
    <property type="term" value="F:ubiquitin protein ligase binding"/>
    <property type="evidence" value="ECO:0000353"/>
    <property type="project" value="UniProtKB"/>
</dbReference>
<dbReference type="GO" id="GO:0044389">
    <property type="term" value="F:ubiquitin-like protein ligase binding"/>
    <property type="evidence" value="ECO:0000318"/>
    <property type="project" value="GO_Central"/>
</dbReference>
<dbReference type="GO" id="GO:1990381">
    <property type="term" value="F:ubiquitin-specific protease binding"/>
    <property type="evidence" value="ECO:0000353"/>
    <property type="project" value="UniProtKB"/>
</dbReference>
<dbReference type="GO" id="GO:0071276">
    <property type="term" value="P:cellular response to cadmium ion"/>
    <property type="evidence" value="ECO:0000314"/>
    <property type="project" value="UniProtKB"/>
</dbReference>
<dbReference type="GO" id="GO:0034605">
    <property type="term" value="P:cellular response to heat"/>
    <property type="evidence" value="ECO:0000314"/>
    <property type="project" value="UniProtKB"/>
</dbReference>
<dbReference type="GO" id="GO:0006281">
    <property type="term" value="P:DNA repair"/>
    <property type="evidence" value="ECO:0000304"/>
    <property type="project" value="ProtInc"/>
</dbReference>
<dbReference type="GO" id="GO:0045759">
    <property type="term" value="P:negative regulation of action potential"/>
    <property type="evidence" value="ECO:0000314"/>
    <property type="project" value="UniProtKB"/>
</dbReference>
<dbReference type="GO" id="GO:1902260">
    <property type="term" value="P:negative regulation of delayed rectifier potassium channel activity"/>
    <property type="evidence" value="ECO:0000314"/>
    <property type="project" value="UniProtKB"/>
</dbReference>
<dbReference type="GO" id="GO:0043392">
    <property type="term" value="P:negative regulation of DNA binding"/>
    <property type="evidence" value="ECO:0000314"/>
    <property type="project" value="CAFA"/>
</dbReference>
<dbReference type="GO" id="GO:0043433">
    <property type="term" value="P:negative regulation of DNA-binding transcription factor activity"/>
    <property type="evidence" value="ECO:0000315"/>
    <property type="project" value="UniProtKB"/>
</dbReference>
<dbReference type="GO" id="GO:0045892">
    <property type="term" value="P:negative regulation of DNA-templated transcription"/>
    <property type="evidence" value="ECO:0000314"/>
    <property type="project" value="GO_Central"/>
</dbReference>
<dbReference type="GO" id="GO:1901017">
    <property type="term" value="P:negative regulation of potassium ion transmembrane transporter activity"/>
    <property type="evidence" value="ECO:0000314"/>
    <property type="project" value="UniProtKB"/>
</dbReference>
<dbReference type="GO" id="GO:0042308">
    <property type="term" value="P:negative regulation of protein import into nucleus"/>
    <property type="evidence" value="ECO:0000314"/>
    <property type="project" value="UniProtKB"/>
</dbReference>
<dbReference type="GO" id="GO:0010621">
    <property type="term" value="P:negative regulation of transcription by transcription factor localization"/>
    <property type="evidence" value="ECO:0000314"/>
    <property type="project" value="UniProtKB"/>
</dbReference>
<dbReference type="GO" id="GO:0030578">
    <property type="term" value="P:PML body organization"/>
    <property type="evidence" value="ECO:0007669"/>
    <property type="project" value="Ensembl"/>
</dbReference>
<dbReference type="GO" id="GO:0032436">
    <property type="term" value="P:positive regulation of proteasomal ubiquitin-dependent protein catabolic process"/>
    <property type="evidence" value="ECO:0000314"/>
    <property type="project" value="UniProtKB"/>
</dbReference>
<dbReference type="GO" id="GO:0031334">
    <property type="term" value="P:positive regulation of protein-containing complex assembly"/>
    <property type="evidence" value="ECO:0000314"/>
    <property type="project" value="BHF-UCL"/>
</dbReference>
<dbReference type="GO" id="GO:0090204">
    <property type="term" value="P:protein localization to nuclear pore"/>
    <property type="evidence" value="ECO:0007669"/>
    <property type="project" value="Ensembl"/>
</dbReference>
<dbReference type="GO" id="GO:0050821">
    <property type="term" value="P:protein stabilization"/>
    <property type="evidence" value="ECO:0000314"/>
    <property type="project" value="UniProtKB"/>
</dbReference>
<dbReference type="GO" id="GO:0016925">
    <property type="term" value="P:protein sumoylation"/>
    <property type="evidence" value="ECO:0000314"/>
    <property type="project" value="UniProtKB"/>
</dbReference>
<dbReference type="GO" id="GO:1903169">
    <property type="term" value="P:regulation of calcium ion transmembrane transport"/>
    <property type="evidence" value="ECO:0000250"/>
    <property type="project" value="BHF-UCL"/>
</dbReference>
<dbReference type="GO" id="GO:0086004">
    <property type="term" value="P:regulation of cardiac muscle cell contraction"/>
    <property type="evidence" value="ECO:0000250"/>
    <property type="project" value="BHF-UCL"/>
</dbReference>
<dbReference type="GO" id="GO:0032880">
    <property type="term" value="P:regulation of protein localization"/>
    <property type="evidence" value="ECO:0000304"/>
    <property type="project" value="UniProtKB"/>
</dbReference>
<dbReference type="GO" id="GO:0031647">
    <property type="term" value="P:regulation of protein stability"/>
    <property type="evidence" value="ECO:0000250"/>
    <property type="project" value="BHF-UCL"/>
</dbReference>
<dbReference type="GO" id="GO:0060021">
    <property type="term" value="P:roof of mouth development"/>
    <property type="evidence" value="ECO:0000250"/>
    <property type="project" value="UniProtKB"/>
</dbReference>
<dbReference type="CDD" id="cd16114">
    <property type="entry name" value="Ubl_SUMO1"/>
    <property type="match status" value="1"/>
</dbReference>
<dbReference type="DisProt" id="DP02294"/>
<dbReference type="FunFam" id="3.10.20.90:FF:000092">
    <property type="entry name" value="Small ubiquitin-related modifier"/>
    <property type="match status" value="1"/>
</dbReference>
<dbReference type="Gene3D" id="3.10.20.90">
    <property type="entry name" value="Phosphatidylinositol 3-kinase Catalytic Subunit, Chain A, domain 1"/>
    <property type="match status" value="1"/>
</dbReference>
<dbReference type="IDEAL" id="IID00378"/>
<dbReference type="InterPro" id="IPR022617">
    <property type="entry name" value="Rad60/SUMO-like_dom"/>
</dbReference>
<dbReference type="InterPro" id="IPR046332">
    <property type="entry name" value="SUMO1_Ubl"/>
</dbReference>
<dbReference type="InterPro" id="IPR000626">
    <property type="entry name" value="Ubiquitin-like_dom"/>
</dbReference>
<dbReference type="InterPro" id="IPR029071">
    <property type="entry name" value="Ubiquitin-like_domsf"/>
</dbReference>
<dbReference type="PANTHER" id="PTHR10562">
    <property type="entry name" value="SMALL UBIQUITIN-RELATED MODIFIER"/>
    <property type="match status" value="1"/>
</dbReference>
<dbReference type="Pfam" id="PF11976">
    <property type="entry name" value="Rad60-SLD"/>
    <property type="match status" value="1"/>
</dbReference>
<dbReference type="SMART" id="SM00213">
    <property type="entry name" value="UBQ"/>
    <property type="match status" value="1"/>
</dbReference>
<dbReference type="SUPFAM" id="SSF54236">
    <property type="entry name" value="Ubiquitin-like"/>
    <property type="match status" value="1"/>
</dbReference>
<dbReference type="PROSITE" id="PS50053">
    <property type="entry name" value="UBIQUITIN_2"/>
    <property type="match status" value="1"/>
</dbReference>
<evidence type="ECO:0000250" key="1">
    <source>
        <dbReference type="UniProtKB" id="P63166"/>
    </source>
</evidence>
<evidence type="ECO:0000255" key="2">
    <source>
        <dbReference type="PROSITE-ProRule" id="PRU00214"/>
    </source>
</evidence>
<evidence type="ECO:0000269" key="3">
    <source>
    </source>
</evidence>
<evidence type="ECO:0000269" key="4">
    <source>
    </source>
</evidence>
<evidence type="ECO:0000269" key="5">
    <source>
    </source>
</evidence>
<evidence type="ECO:0000269" key="6">
    <source>
    </source>
</evidence>
<evidence type="ECO:0000269" key="7">
    <source>
    </source>
</evidence>
<evidence type="ECO:0000269" key="8">
    <source>
    </source>
</evidence>
<evidence type="ECO:0000269" key="9">
    <source>
    </source>
</evidence>
<evidence type="ECO:0000269" key="10">
    <source>
    </source>
</evidence>
<evidence type="ECO:0000269" key="11">
    <source>
    </source>
</evidence>
<evidence type="ECO:0000269" key="12">
    <source>
    </source>
</evidence>
<evidence type="ECO:0000269" key="13">
    <source>
    </source>
</evidence>
<evidence type="ECO:0000269" key="14">
    <source>
    </source>
</evidence>
<evidence type="ECO:0000269" key="15">
    <source>
    </source>
</evidence>
<evidence type="ECO:0000269" key="16">
    <source>
    </source>
</evidence>
<evidence type="ECO:0000269" key="17">
    <source>
    </source>
</evidence>
<evidence type="ECO:0000269" key="18">
    <source>
    </source>
</evidence>
<evidence type="ECO:0000269" key="19">
    <source>
    </source>
</evidence>
<evidence type="ECO:0000269" key="20">
    <source>
    </source>
</evidence>
<evidence type="ECO:0000269" key="21">
    <source>
    </source>
</evidence>
<evidence type="ECO:0000269" key="22">
    <source>
    </source>
</evidence>
<evidence type="ECO:0000269" key="23">
    <source>
    </source>
</evidence>
<evidence type="ECO:0000269" key="24">
    <source>
    </source>
</evidence>
<evidence type="ECO:0000269" key="25">
    <source>
    </source>
</evidence>
<evidence type="ECO:0000269" key="26">
    <source>
    </source>
</evidence>
<evidence type="ECO:0000269" key="27">
    <source>
    </source>
</evidence>
<evidence type="ECO:0000269" key="28">
    <source>
    </source>
</evidence>
<evidence type="ECO:0000269" key="29">
    <source>
    </source>
</evidence>
<evidence type="ECO:0000269" key="30">
    <source>
    </source>
</evidence>
<evidence type="ECO:0000269" key="31">
    <source>
    </source>
</evidence>
<evidence type="ECO:0000269" key="32">
    <source>
    </source>
</evidence>
<evidence type="ECO:0000269" key="33">
    <source>
    </source>
</evidence>
<evidence type="ECO:0000269" key="34">
    <source>
    </source>
</evidence>
<evidence type="ECO:0000305" key="35"/>
<evidence type="ECO:0007744" key="36">
    <source>
    </source>
</evidence>
<evidence type="ECO:0007744" key="37">
    <source>
    </source>
</evidence>
<evidence type="ECO:0007744" key="38">
    <source>
    </source>
</evidence>
<evidence type="ECO:0007744" key="39">
    <source>
    </source>
</evidence>
<evidence type="ECO:0007744" key="40">
    <source>
    </source>
</evidence>
<evidence type="ECO:0007744" key="41">
    <source>
    </source>
</evidence>
<evidence type="ECO:0007744" key="42">
    <source>
    </source>
</evidence>
<evidence type="ECO:0007744" key="43">
    <source>
    </source>
</evidence>
<evidence type="ECO:0007744" key="44">
    <source>
    </source>
</evidence>
<evidence type="ECO:0007744" key="45">
    <source>
    </source>
</evidence>
<evidence type="ECO:0007829" key="46">
    <source>
        <dbReference type="PDB" id="1Z5S"/>
    </source>
</evidence>
<evidence type="ECO:0007829" key="47">
    <source>
        <dbReference type="PDB" id="2N1A"/>
    </source>
</evidence>
<evidence type="ECO:0007829" key="48">
    <source>
        <dbReference type="PDB" id="2PE6"/>
    </source>
</evidence>
<evidence type="ECO:0007829" key="49">
    <source>
        <dbReference type="PDB" id="5B7A"/>
    </source>
</evidence>
<evidence type="ECO:0007829" key="50">
    <source>
        <dbReference type="PDB" id="6UYR"/>
    </source>
</evidence>
<evidence type="ECO:0007829" key="51">
    <source>
        <dbReference type="PDB" id="6WW3"/>
    </source>
</evidence>
<evidence type="ECO:0007829" key="52">
    <source>
        <dbReference type="PDB" id="6XOG"/>
    </source>
</evidence>
<evidence type="ECO:0007829" key="53">
    <source>
        <dbReference type="PDB" id="8DJH"/>
    </source>
</evidence>
<feature type="initiator methionine" description="Removed" evidence="25 38 39 40">
    <location>
        <position position="1"/>
    </location>
</feature>
<feature type="chain" id="PRO_0000035939" description="Small ubiquitin-related modifier 1">
    <location>
        <begin position="2"/>
        <end position="97"/>
    </location>
</feature>
<feature type="propeptide" id="PRO_0000035940" evidence="11">
    <location>
        <begin position="98"/>
        <end position="101"/>
    </location>
</feature>
<feature type="domain" description="Ubiquitin-like" evidence="2">
    <location>
        <begin position="20"/>
        <end position="97"/>
    </location>
</feature>
<feature type="region of interest" description="(Microbial infection) Interaction with Tula hantavirus" evidence="8">
    <location>
        <begin position="16"/>
        <end position="25"/>
    </location>
</feature>
<feature type="region of interest" description="(Microbial infection) Interaction with Tula hantavirus" evidence="8">
    <location>
        <begin position="37"/>
        <end position="40"/>
    </location>
</feature>
<feature type="site" description="Interaction with PIAS2">
    <location>
        <position position="36"/>
    </location>
</feature>
<feature type="modified residue" description="N-acetylserine" evidence="25 38 39 40">
    <location>
        <position position="2"/>
    </location>
</feature>
<feature type="modified residue" description="Phosphoserine" evidence="23 36 37 39 40 41">
    <location>
        <position position="2"/>
    </location>
</feature>
<feature type="modified residue" description="Phosphoserine" evidence="39">
    <location>
        <position position="9"/>
    </location>
</feature>
<feature type="modified residue" description="Phosphoserine" evidence="41">
    <location>
        <position position="32"/>
    </location>
</feature>
<feature type="cross-link" description="Glycyl lysine isopeptide (Lys-Gly) (interchain with G-Cter in SUMO1); alternate">
    <location>
        <position position="7"/>
    </location>
</feature>
<feature type="cross-link" description="Glycyl lysine isopeptide (Lys-Gly) (interchain with G-Cter in SUMO2); alternate" evidence="42 43 44 45">
    <location>
        <position position="7"/>
    </location>
</feature>
<feature type="cross-link" description="Glycyl lysine isopeptide (Lys-Gly) (interchain with G-Cter in SUMO2)" evidence="42 45">
    <location>
        <position position="16"/>
    </location>
</feature>
<feature type="cross-link" description="Glycyl lysine isopeptide (Lys-Gly) (interchain with G-Cter in SUMO2)" evidence="42 44 45">
    <location>
        <position position="17"/>
    </location>
</feature>
<feature type="cross-link" description="Glycyl lysine isopeptide (Lys-Gly) (interchain with G-Cter in SUMO2)" evidence="45">
    <location>
        <position position="23"/>
    </location>
</feature>
<feature type="cross-link" description="Glycyl lysine isopeptide (Lys-Gly) (interchain with G-Cter in SUMO1)">
    <location>
        <position position="25"/>
    </location>
</feature>
<feature type="cross-link" description="Glycyl lysine isopeptide (Lys-Gly) (interchain with G-Cter in SUMO2)" evidence="43 45">
    <location>
        <position position="37"/>
    </location>
</feature>
<feature type="cross-link" description="Glycyl lysine isopeptide (Lys-Gly) (interchain with G-Cter in SUMO2)" evidence="45">
    <location>
        <position position="39"/>
    </location>
</feature>
<feature type="cross-link" description="Glycyl lysine isopeptide (Lys-Gly) (interchain with G-Cter in SUMO2)" evidence="45">
    <location>
        <position position="45"/>
    </location>
</feature>
<feature type="cross-link" description="Glycyl lysine isopeptide (Lys-Gly) (interchain with G-Cter in SUMO2)" evidence="45">
    <location>
        <position position="46"/>
    </location>
</feature>
<feature type="cross-link" description="Glycyl lysine isopeptide (Gly-Lys) (interchain with K-? in acceptor proteins)" evidence="32">
    <location>
        <position position="97"/>
    </location>
</feature>
<feature type="splice variant" id="VSP_046756" description="In isoform 2." evidence="35">
    <location>
        <begin position="4"/>
        <end position="28"/>
    </location>
</feature>
<feature type="mutagenesis site" description="Abolishes binding to PIAS2." evidence="16">
    <original>F</original>
    <variation>A</variation>
    <location>
        <position position="36"/>
    </location>
</feature>
<feature type="mutagenesis site" description="Abolishes sumoylation of ZBED1." evidence="32">
    <original>G</original>
    <variation>A</variation>
    <location>
        <position position="97"/>
    </location>
</feature>
<feature type="sequence conflict" description="In Ref. 13; AAH66306." evidence="35" ref="13">
    <original>H</original>
    <variation>N</variation>
    <location>
        <position position="75"/>
    </location>
</feature>
<feature type="helix" evidence="51">
    <location>
        <begin position="4"/>
        <end position="6"/>
    </location>
</feature>
<feature type="helix" evidence="53">
    <location>
        <begin position="11"/>
        <end position="17"/>
    </location>
</feature>
<feature type="strand" evidence="50">
    <location>
        <begin position="22"/>
        <end position="27"/>
    </location>
</feature>
<feature type="strand" evidence="46">
    <location>
        <begin position="29"/>
        <end position="31"/>
    </location>
</feature>
<feature type="strand" evidence="50">
    <location>
        <begin position="33"/>
        <end position="38"/>
    </location>
</feature>
<feature type="strand" evidence="48">
    <location>
        <begin position="40"/>
        <end position="42"/>
    </location>
</feature>
<feature type="turn" evidence="52">
    <location>
        <begin position="45"/>
        <end position="47"/>
    </location>
</feature>
<feature type="helix" evidence="50">
    <location>
        <begin position="48"/>
        <end position="55"/>
    </location>
</feature>
<feature type="helix" evidence="50">
    <location>
        <begin position="59"/>
        <end position="61"/>
    </location>
</feature>
<feature type="strand" evidence="50">
    <location>
        <begin position="62"/>
        <end position="66"/>
    </location>
</feature>
<feature type="strand" evidence="49">
    <location>
        <begin position="69"/>
        <end position="71"/>
    </location>
</feature>
<feature type="helix" evidence="50">
    <location>
        <begin position="77"/>
        <end position="80"/>
    </location>
</feature>
<feature type="strand" evidence="50">
    <location>
        <begin position="87"/>
        <end position="92"/>
    </location>
</feature>
<feature type="strand" evidence="47">
    <location>
        <begin position="96"/>
        <end position="99"/>
    </location>
</feature>
<accession>P63165</accession>
<accession>A8MUS8</accession>
<accession>B2R4I5</accession>
<accession>P55856</accession>
<accession>Q6FGG0</accession>
<accession>Q6NZ62</accession>
<accession>Q93068</accession>
<sequence>MSDQEAKPSTEDLGDKKEGEYIKLKVIGQDSSEIHFKVKMTTHLKKLKESYCQRQGVPMNSLRFLFEGQRIADNHTPKELGMEEEDVIEVYQEQTGGHSTV</sequence>
<comment type="function">
    <text evidence="21 22 24 27 31 33 34">Ubiquitin-like protein that can be covalently attached to proteins as a monomer or a lysine-linked polymer. Covalent attachment via an isopeptide bond to its substrates requires prior activation by the E1 complex SAE1-SAE2 and linkage to the E2 enzyme UBE2I, and can be promoted by E3 ligases such as PIAS1-4, RANBP2 or CBX4. This post-translational modification on lysine residues of proteins plays a crucial role in a number of cellular processes such as nuclear transport, DNA replication and repair, mitosis and signal transduction. Involved for instance in targeting RANGAP1 to the nuclear pore complex protein RANBP2. Covalently attached to the voltage-gated potassium channel KCNB1; this modulates the gating characteristics of KCNB1 (PubMed:19223394). Polymeric SUMO1 chains are also susceptible to polyubiquitination which functions as a signal for proteasomal degradation of modified proteins. May also regulate a network of genes involved in palate development. Covalently attached to ZFHX3 (PubMed:24651376).</text>
</comment>
<comment type="subunit">
    <text evidence="1 4 6 9 10 12 13 14 15 16 17 19 20 22 24 26 27 30">Covalently attached to KCNB1; UBE2I increases cross-linking with KCNB1 and PIAS1 decreases cross-links with KCNB1 (PubMed:15931224, PubMed:19223394). Interacts with SAE2, RANBP2, PIAS1 and PIAS2 (PubMed:10961991, PubMed:15608651, PubMed:15660128, PubMed:15931224, PubMed:16204249). Interacts with PRKN (PubMed:16955485). Covalently attached to a number of proteins such as IKFZ1, PML, RANGAP1, HIPK2, SP100, p53, p73-alpha, MDM2, JUN, DNMT3B and TDG (PubMed:10961991, PubMed:15931224, PubMed:15959518, PubMed:17099698). Also interacts with HIF1A, HIPK2, HIPK3, CHD3, EXOSC9, RAD51 and RAD52 (PubMed:10961991, PubMed:12565818). Interacts with USP25 (via ts SIM domain); the interaction weakly sumoylates USP25 (PubMed:18538659). Interacts with SIMC1, CASP8AP2, RNF111 and SOBP (via SIM domains) (PubMed:23086935). Interacts with BHLHE40/DEC1 (PubMed:21829689). Interacts with RWDD3 (PubMed:17956732). Interacts with UBE2I/UBC9 and this interaction is enhanced in the presence of RWDD3 (PubMed:12924945, PubMed:17956732). Interacts with MTA1 (PubMed:21965678). Interacts with SENP2 (PubMed:15296745). Interacts with HINT1 (By similarity).</text>
</comment>
<comment type="subunit">
    <text evidence="28">(Microbial infection) Interacts with Epstein-barr virus BGLF4.</text>
</comment>
<comment type="subunit">
    <text evidence="8">(Microbial infection) Interacts (via N-terminus) with Tula hantavirus nucleoprotein.</text>
</comment>
<comment type="subunit">
    <text evidence="7">(Microbial infection) Interacts (via N-terminus) with Hantaan hantavirus nucleoprotein.</text>
</comment>
<comment type="interaction">
    <interactant intactId="EBI-80140">
        <id>P63165</id>
    </interactant>
    <interactant intactId="EBI-608057">
        <id>P10275</id>
        <label>AR</label>
    </interactant>
    <organismsDiffer>false</organismsDiffer>
    <experiments>7</experiments>
</comment>
<comment type="interaction">
    <interactant intactId="EBI-80140">
        <id>P63165</id>
    </interactant>
    <interactant intactId="EBI-742108">
        <id>Q96B23</id>
        <label>ARK2N</label>
    </interactant>
    <organismsDiffer>false</organismsDiffer>
    <experiments>7</experiments>
</comment>
<comment type="interaction">
    <interactant intactId="EBI-80140">
        <id>P63165</id>
    </interactant>
    <interactant intactId="EBI-1170906">
        <id>P15336</id>
        <label>ATF2</label>
    </interactant>
    <organismsDiffer>false</organismsDiffer>
    <experiments>6</experiments>
</comment>
<comment type="interaction">
    <interactant intactId="EBI-80140">
        <id>P63165</id>
    </interactant>
    <interactant intactId="EBI-16429430">
        <id>A0A0S2Z4M1</id>
        <label>AXIN1</label>
    </interactant>
    <organismsDiffer>false</organismsDiffer>
    <experiments>6</experiments>
</comment>
<comment type="interaction">
    <interactant intactId="EBI-80140">
        <id>P63165</id>
    </interactant>
    <interactant intactId="EBI-710484">
        <id>O15169</id>
        <label>AXIN1</label>
    </interactant>
    <organismsDiffer>false</organismsDiffer>
    <experiments>3</experiments>
</comment>
<comment type="interaction">
    <interactant intactId="EBI-80140">
        <id>P63165</id>
    </interactant>
    <interactant intactId="EBI-349905">
        <id>P38398</id>
        <label>BRCA1</label>
    </interactant>
    <organismsDiffer>false</organismsDiffer>
    <experiments>3</experiments>
</comment>
<comment type="interaction">
    <interactant intactId="EBI-80140">
        <id>P63165</id>
    </interactant>
    <interactant intactId="EBI-311155">
        <id>Q9Y2F9</id>
        <label>BTBD3</label>
    </interactant>
    <organismsDiffer>false</organismsDiffer>
    <experiments>3</experiments>
</comment>
<comment type="interaction">
    <interactant intactId="EBI-80140">
        <id>P63165</id>
    </interactant>
    <interactant intactId="EBI-751319">
        <id>Q9H257</id>
        <label>CARD9</label>
    </interactant>
    <organismsDiffer>false</organismsDiffer>
    <experiments>3</experiments>
</comment>
<comment type="interaction">
    <interactant intactId="EBI-80140">
        <id>P63165</id>
    </interactant>
    <interactant intactId="EBI-722425">
        <id>O00257</id>
        <label>CBX4</label>
    </interactant>
    <organismsDiffer>false</organismsDiffer>
    <experiments>4</experiments>
</comment>
<comment type="interaction">
    <interactant intactId="EBI-80140">
        <id>P63165</id>
    </interactant>
    <interactant intactId="EBI-9997012">
        <id>P17676-1</id>
        <label>CEBPB</label>
    </interactant>
    <organismsDiffer>false</organismsDiffer>
    <experiments>5</experiments>
</comment>
<comment type="interaction">
    <interactant intactId="EBI-80140">
        <id>P63165</id>
    </interactant>
    <interactant intactId="EBI-77321">
        <id>Q9UER7</id>
        <label>DAXX</label>
    </interactant>
    <organismsDiffer>false</organismsDiffer>
    <experiments>7</experiments>
</comment>
<comment type="interaction">
    <interactant intactId="EBI-80140">
        <id>P63165</id>
    </interactant>
    <interactant intactId="EBI-748597">
        <id>Q05D60</id>
        <label>DEUP1</label>
    </interactant>
    <organismsDiffer>false</organismsDiffer>
    <experiments>3</experiments>
</comment>
<comment type="interaction">
    <interactant intactId="EBI-80140">
        <id>P63165</id>
    </interactant>
    <interactant intactId="EBI-80125">
        <id>Q9UBC3</id>
        <label>DNMT3B</label>
    </interactant>
    <organismsDiffer>false</organismsDiffer>
    <experiments>4</experiments>
</comment>
<comment type="interaction">
    <interactant intactId="EBI-80140">
        <id>P63165</id>
    </interactant>
    <interactant intactId="EBI-740376">
        <id>Q86UW9</id>
        <label>DTX2</label>
    </interactant>
    <organismsDiffer>false</organismsDiffer>
    <experiments>3</experiments>
</comment>
<comment type="interaction">
    <interactant intactId="EBI-80140">
        <id>P63165</id>
    </interactant>
    <interactant intactId="EBI-2949647">
        <id>Q8WWZ3</id>
        <label>EDARADD</label>
    </interactant>
    <organismsDiffer>false</organismsDiffer>
    <experiments>5</experiments>
</comment>
<comment type="interaction">
    <interactant intactId="EBI-80140">
        <id>P63165</id>
    </interactant>
    <interactant intactId="EBI-73440">
        <id>P06730</id>
        <label>EIF4E</label>
    </interactant>
    <organismsDiffer>false</organismsDiffer>
    <experiments>5</experiments>
</comment>
<comment type="interaction">
    <interactant intactId="EBI-80140">
        <id>P63165</id>
    </interactant>
    <interactant intactId="EBI-726632">
        <id>P19419</id>
        <label>ELK1</label>
    </interactant>
    <organismsDiffer>false</organismsDiffer>
    <experiments>5</experiments>
</comment>
<comment type="interaction">
    <interactant intactId="EBI-80140">
        <id>P63165</id>
    </interactant>
    <interactant intactId="EBI-15799641">
        <id>P19419-1</id>
        <label>ELK1</label>
    </interactant>
    <organismsDiffer>false</organismsDiffer>
    <experiments>2</experiments>
</comment>
<comment type="interaction">
    <interactant intactId="EBI-80140">
        <id>P63165</id>
    </interactant>
    <interactant intactId="EBI-16434659">
        <id>A0A0S2Z3N6</id>
        <label>ETV6</label>
    </interactant>
    <organismsDiffer>false</organismsDiffer>
    <experiments>3</experiments>
</comment>
<comment type="interaction">
    <interactant intactId="EBI-80140">
        <id>P63165</id>
    </interactant>
    <interactant intactId="EBI-726822">
        <id>Q9BPY3</id>
        <label>FAM118B</label>
    </interactant>
    <organismsDiffer>false</organismsDiffer>
    <experiments>3</experiments>
</comment>
<comment type="interaction">
    <interactant intactId="EBI-80140">
        <id>P63165</id>
    </interactant>
    <interactant intactId="EBI-10244131">
        <id>Q8TES7-6</id>
        <label>FBF1</label>
    </interactant>
    <organismsDiffer>false</organismsDiffer>
    <experiments>3</experiments>
</comment>
<comment type="interaction">
    <interactant intactId="EBI-80140">
        <id>P63165</id>
    </interactant>
    <interactant intactId="EBI-10172181">
        <id>Q53SE7</id>
        <label>FLJ13057</label>
    </interactant>
    <organismsDiffer>false</organismsDiffer>
    <experiments>3</experiments>
</comment>
<comment type="interaction">
    <interactant intactId="EBI-80140">
        <id>P63165</id>
    </interactant>
    <interactant intactId="EBI-1059030">
        <id>O95073</id>
        <label>FSBP</label>
    </interactant>
    <organismsDiffer>false</organismsDiffer>
    <experiments>3</experiments>
</comment>
<comment type="interaction">
    <interactant intactId="EBI-80140">
        <id>P63165</id>
    </interactant>
    <interactant intactId="EBI-740220">
        <id>O14964</id>
        <label>HGS</label>
    </interactant>
    <organismsDiffer>false</organismsDiffer>
    <experiments>3</experiments>
</comment>
<comment type="interaction">
    <interactant intactId="EBI-80140">
        <id>P63165</id>
    </interactant>
    <interactant intactId="EBI-447269">
        <id>Q16665</id>
        <label>HIF1A</label>
    </interactant>
    <organismsDiffer>false</organismsDiffer>
    <experiments>4</experiments>
</comment>
<comment type="interaction">
    <interactant intactId="EBI-80140">
        <id>P63165</id>
    </interactant>
    <interactant intactId="EBI-357966">
        <id>P07910</id>
        <label>HNRNPC</label>
    </interactant>
    <organismsDiffer>false</organismsDiffer>
    <experiments>6</experiments>
</comment>
<comment type="interaction">
    <interactant intactId="EBI-80140">
        <id>P63165</id>
    </interactant>
    <interactant intactId="EBI-719620">
        <id>Q00613</id>
        <label>HSF1</label>
    </interactant>
    <organismsDiffer>false</organismsDiffer>
    <experiments>2</experiments>
</comment>
<comment type="interaction">
    <interactant intactId="EBI-80140">
        <id>P63165</id>
    </interactant>
    <interactant intactId="EBI-466029">
        <id>P42858</id>
        <label>HTT</label>
    </interactant>
    <organismsDiffer>false</organismsDiffer>
    <experiments>3</experiments>
</comment>
<comment type="interaction">
    <interactant intactId="EBI-80140">
        <id>P63165</id>
    </interactant>
    <interactant intactId="EBI-81279">
        <id>Q9Y6K9</id>
        <label>IKBKG</label>
    </interactant>
    <organismsDiffer>false</organismsDiffer>
    <experiments>3</experiments>
</comment>
<comment type="interaction">
    <interactant intactId="EBI-80140">
        <id>P63165</id>
    </interactant>
    <interactant intactId="EBI-1055781">
        <id>P10914</id>
        <label>IRF1</label>
    </interactant>
    <organismsDiffer>false</organismsDiffer>
    <experiments>2</experiments>
</comment>
<comment type="interaction">
    <interactant intactId="EBI-80140">
        <id>P63165</id>
    </interactant>
    <interactant intactId="EBI-3914675">
        <id>O00180</id>
        <label>KCNK1</label>
    </interactant>
    <organismsDiffer>false</organismsDiffer>
    <experiments>3</experiments>
</comment>
<comment type="interaction">
    <interactant intactId="EBI-80140">
        <id>P63165</id>
    </interactant>
    <interactant intactId="EBI-741424">
        <id>Q8NDC0</id>
        <label>MAPK1IP1L</label>
    </interactant>
    <organismsDiffer>false</organismsDiffer>
    <experiments>3</experiments>
</comment>
<comment type="interaction">
    <interactant intactId="EBI-80140">
        <id>P63165</id>
    </interactant>
    <interactant intactId="EBI-867196">
        <id>Q9UIS9</id>
        <label>MBD1</label>
    </interactant>
    <organismsDiffer>false</organismsDiffer>
    <experiments>3</experiments>
</comment>
<comment type="interaction">
    <interactant intactId="EBI-80140">
        <id>P63165</id>
    </interactant>
    <interactant intactId="EBI-1189067">
        <id>P51608</id>
        <label>MECP2</label>
    </interactant>
    <organismsDiffer>false</organismsDiffer>
    <experiments>2</experiments>
</comment>
<comment type="interaction">
    <interactant intactId="EBI-80140">
        <id>P63165</id>
    </interactant>
    <interactant intactId="EBI-15799584">
        <id>Q02078-1</id>
        <label>MEF2A</label>
    </interactant>
    <organismsDiffer>false</organismsDiffer>
    <experiments>3</experiments>
</comment>
<comment type="interaction">
    <interactant intactId="EBI-80140">
        <id>P63165</id>
    </interactant>
    <interactant intactId="EBI-3910192">
        <id>O75030</id>
        <label>MITF</label>
    </interactant>
    <organismsDiffer>false</organismsDiffer>
    <experiments>2</experiments>
</comment>
<comment type="interaction">
    <interactant intactId="EBI-80140">
        <id>P63165</id>
    </interactant>
    <interactant intactId="EBI-298355">
        <id>P10242</id>
        <label>MYB</label>
    </interactant>
    <organismsDiffer>false</organismsDiffer>
    <experiments>3</experiments>
</comment>
<comment type="interaction">
    <interactant intactId="EBI-80140">
        <id>P63165</id>
    </interactant>
    <interactant intactId="EBI-307326">
        <id>Q00653</id>
        <label>NFKB2</label>
    </interactant>
    <organismsDiffer>false</organismsDiffer>
    <experiments>2</experiments>
</comment>
<comment type="interaction">
    <interactant intactId="EBI-80140">
        <id>P63165</id>
    </interactant>
    <interactant intactId="EBI-354150">
        <id>P06748-1</id>
        <label>NPM1</label>
    </interactant>
    <organismsDiffer>false</organismsDiffer>
    <experiments>3</experiments>
</comment>
<comment type="interaction">
    <interactant intactId="EBI-80140">
        <id>P63165</id>
    </interactant>
    <interactant intactId="EBI-355676">
        <id>P09874</id>
        <label>PARP1</label>
    </interactant>
    <organismsDiffer>false</organismsDiffer>
    <experiments>2</experiments>
</comment>
<comment type="interaction">
    <interactant intactId="EBI-80140">
        <id>P63165</id>
    </interactant>
    <interactant intactId="EBI-348555">
        <id>O75928</id>
        <label>PIAS2</label>
    </interactant>
    <organismsDiffer>false</organismsDiffer>
    <experiments>8</experiments>
</comment>
<comment type="interaction">
    <interactant intactId="EBI-80140">
        <id>P63165</id>
    </interactant>
    <interactant intactId="EBI-348567">
        <id>O75928-2</id>
        <label>PIAS2</label>
    </interactant>
    <organismsDiffer>false</organismsDiffer>
    <experiments>3</experiments>
</comment>
<comment type="interaction">
    <interactant intactId="EBI-80140">
        <id>P63165</id>
    </interactant>
    <interactant intactId="EBI-295890">
        <id>P29590</id>
        <label>PML</label>
    </interactant>
    <organismsDiffer>false</organismsDiffer>
    <experiments>6</experiments>
</comment>
<comment type="interaction">
    <interactant intactId="EBI-80140">
        <id>P63165</id>
    </interactant>
    <interactant intactId="EBI-7839538">
        <id>O75626-2</id>
        <label>PRDM1</label>
    </interactant>
    <organismsDiffer>false</organismsDiffer>
    <experiments>2</experiments>
</comment>
<comment type="interaction">
    <interactant intactId="EBI-80140">
        <id>P63165</id>
    </interactant>
    <interactant intactId="EBI-9027467">
        <id>O75360</id>
        <label>PROP1</label>
    </interactant>
    <organismsDiffer>false</organismsDiffer>
    <experiments>3</experiments>
</comment>
<comment type="interaction">
    <interactant intactId="EBI-80140">
        <id>P63165</id>
    </interactant>
    <interactant intactId="EBI-1801773">
        <id>O75475</id>
        <label>PSIP1</label>
    </interactant>
    <organismsDiffer>false</organismsDiffer>
    <experiments>4</experiments>
</comment>
<comment type="interaction">
    <interactant intactId="EBI-80140">
        <id>P63165</id>
    </interactant>
    <interactant intactId="EBI-948156">
        <id>Q9Y4B4</id>
        <label>RAD54L2</label>
    </interactant>
    <organismsDiffer>false</organismsDiffer>
    <experiments>6</experiments>
</comment>
<comment type="interaction">
    <interactant intactId="EBI-80140">
        <id>P63165</id>
    </interactant>
    <interactant intactId="EBI-396091">
        <id>P46060</id>
        <label>RANGAP1</label>
    </interactant>
    <organismsDiffer>false</organismsDiffer>
    <experiments>14</experiments>
</comment>
<comment type="interaction">
    <interactant intactId="EBI-80140">
        <id>P63165</id>
    </interactant>
    <interactant intactId="EBI-413374">
        <id>P10276</id>
        <label>RARA</label>
    </interactant>
    <organismsDiffer>false</organismsDiffer>
    <experiments>5</experiments>
</comment>
<comment type="interaction">
    <interactant intactId="EBI-80140">
        <id>P63165</id>
    </interactant>
    <interactant intactId="EBI-372094">
        <id>Q9BQY4</id>
        <label>RHOXF2</label>
    </interactant>
    <organismsDiffer>false</organismsDiffer>
    <experiments>3</experiments>
</comment>
<comment type="interaction">
    <interactant intactId="EBI-80140">
        <id>P63165</id>
    </interactant>
    <interactant intactId="EBI-2340927">
        <id>P78317</id>
        <label>RNF4</label>
    </interactant>
    <organismsDiffer>false</organismsDiffer>
    <experiments>3</experiments>
</comment>
<comment type="interaction">
    <interactant intactId="EBI-80140">
        <id>P63165</id>
    </interactant>
    <interactant intactId="EBI-1549885">
        <id>Q9Y3V2</id>
        <label>RWDD3</label>
    </interactant>
    <organismsDiffer>false</organismsDiffer>
    <experiments>2</experiments>
</comment>
<comment type="interaction">
    <interactant intactId="EBI-80140">
        <id>P63165</id>
    </interactant>
    <interactant intactId="EBI-607761">
        <id>O43290</id>
        <label>SART1</label>
    </interactant>
    <organismsDiffer>false</organismsDiffer>
    <experiments>2</experiments>
</comment>
<comment type="interaction">
    <interactant intactId="EBI-80140">
        <id>P63165</id>
    </interactant>
    <interactant intactId="EBI-743747">
        <id>Q01826</id>
        <label>SATB1</label>
    </interactant>
    <organismsDiffer>false</organismsDiffer>
    <experiments>2</experiments>
</comment>
<comment type="interaction">
    <interactant intactId="EBI-80140">
        <id>P63165</id>
    </interactant>
    <interactant intactId="EBI-2822935">
        <id>Q9P0U3</id>
        <label>SENP1</label>
    </interactant>
    <organismsDiffer>false</organismsDiffer>
    <experiments>11</experiments>
</comment>
<comment type="interaction">
    <interactant intactId="EBI-80140">
        <id>P63165</id>
    </interactant>
    <interactant intactId="EBI-714881">
        <id>Q9HC62</id>
        <label>SENP2</label>
    </interactant>
    <organismsDiffer>false</organismsDiffer>
    <experiments>2</experiments>
</comment>
<comment type="interaction">
    <interactant intactId="EBI-80140">
        <id>P63165</id>
    </interactant>
    <interactant intactId="EBI-749336">
        <id>Q8TAD8</id>
        <label>SNIP1</label>
    </interactant>
    <organismsDiffer>false</organismsDiffer>
    <experiments>2</experiments>
</comment>
<comment type="interaction">
    <interactant intactId="EBI-80140">
        <id>P63165</id>
    </interactant>
    <interactant intactId="EBI-1167533">
        <id>P56693</id>
        <label>SOX10</label>
    </interactant>
    <organismsDiffer>false</organismsDiffer>
    <experiments>2</experiments>
</comment>
<comment type="interaction">
    <interactant intactId="EBI-80140">
        <id>P63165</id>
    </interactant>
    <interactant intactId="EBI-6124081">
        <id>P48431</id>
        <label>SOX2</label>
    </interactant>
    <organismsDiffer>false</organismsDiffer>
    <experiments>4</experiments>
</comment>
<comment type="interaction">
    <interactant intactId="EBI-80140">
        <id>P63165</id>
    </interactant>
    <interactant intactId="EBI-751145">
        <id>P23497</id>
        <label>SP100</label>
    </interactant>
    <organismsDiffer>false</organismsDiffer>
    <experiments>6</experiments>
</comment>
<comment type="interaction">
    <interactant intactId="EBI-80140">
        <id>P63165</id>
    </interactant>
    <interactant intactId="EBI-6589365">
        <id>P23497-2</id>
        <label>SP100</label>
    </interactant>
    <organismsDiffer>false</organismsDiffer>
    <experiments>3</experiments>
</comment>
<comment type="interaction">
    <interactant intactId="EBI-80140">
        <id>P63165</id>
    </interactant>
    <interactant intactId="EBI-10175576">
        <id>G2XKQ0</id>
        <label>SUMO1P1</label>
    </interactant>
    <organismsDiffer>false</organismsDiffer>
    <experiments>3</experiments>
</comment>
<comment type="interaction">
    <interactant intactId="EBI-80140">
        <id>P63165</id>
    </interactant>
    <interactant intactId="EBI-356349">
        <id>Q92844</id>
        <label>TANK</label>
    </interactant>
    <organismsDiffer>false</organismsDiffer>
    <experiments>8</experiments>
</comment>
<comment type="interaction">
    <interactant intactId="EBI-80140">
        <id>P63165</id>
    </interactant>
    <interactant intactId="EBI-348333">
        <id>Q13569</id>
        <label>TDG</label>
    </interactant>
    <organismsDiffer>false</organismsDiffer>
    <experiments>3</experiments>
</comment>
<comment type="interaction">
    <interactant intactId="EBI-80140">
        <id>P63165</id>
    </interactant>
    <interactant intactId="EBI-717422">
        <id>Q12800</id>
        <label>TFCP2</label>
    </interactant>
    <organismsDiffer>false</organismsDiffer>
    <experiments>3</experiments>
</comment>
<comment type="interaction">
    <interactant intactId="EBI-80140">
        <id>P63165</id>
    </interactant>
    <interactant intactId="EBI-1048957">
        <id>P19532</id>
        <label>TFE3</label>
    </interactant>
    <organismsDiffer>false</organismsDiffer>
    <experiments>2</experiments>
</comment>
<comment type="interaction">
    <interactant intactId="EBI-80140">
        <id>P63165</id>
    </interactant>
    <interactant intactId="EBI-2814208">
        <id>P19484</id>
        <label>TFEB</label>
    </interactant>
    <organismsDiffer>false</organismsDiffer>
    <experiments>2</experiments>
</comment>
<comment type="interaction">
    <interactant intactId="EBI-80140">
        <id>P63165</id>
    </interactant>
    <interactant intactId="EBI-366083">
        <id>P04637</id>
        <label>TP53</label>
    </interactant>
    <organismsDiffer>false</organismsDiffer>
    <experiments>3</experiments>
</comment>
<comment type="interaction">
    <interactant intactId="EBI-80140">
        <id>P63165</id>
    </interactant>
    <interactant intactId="EBI-8022649">
        <id>Q12888-1</id>
        <label>TP53BP1</label>
    </interactant>
    <organismsDiffer>false</organismsDiffer>
    <experiments>2</experiments>
</comment>
<comment type="interaction">
    <interactant intactId="EBI-80140">
        <id>P63165</id>
    </interactant>
    <interactant intactId="EBI-355744">
        <id>Q12933</id>
        <label>TRAF2</label>
    </interactant>
    <organismsDiffer>false</organismsDiffer>
    <experiments>3</experiments>
</comment>
<comment type="interaction">
    <interactant intactId="EBI-80140">
        <id>P63165</id>
    </interactant>
    <interactant intactId="EBI-3650647">
        <id>Q9BUZ4</id>
        <label>TRAF4</label>
    </interactant>
    <organismsDiffer>false</organismsDiffer>
    <experiments>3</experiments>
</comment>
<comment type="interaction">
    <interactant intactId="EBI-80140">
        <id>P63165</id>
    </interactant>
    <interactant intactId="EBI-523498">
        <id>O00463</id>
        <label>TRAF5</label>
    </interactant>
    <organismsDiffer>false</organismsDiffer>
    <experiments>3</experiments>
</comment>
<comment type="interaction">
    <interactant intactId="EBI-80140">
        <id>P63165</id>
    </interactant>
    <interactant intactId="EBI-718569">
        <id>Q9UBT2</id>
        <label>UBA2</label>
    </interactant>
    <organismsDiffer>false</organismsDiffer>
    <experiments>9</experiments>
</comment>
<comment type="interaction">
    <interactant intactId="EBI-80140">
        <id>P63165</id>
    </interactant>
    <interactant intactId="EBI-80168">
        <id>P63279</id>
        <label>UBE2I</label>
    </interactant>
    <organismsDiffer>false</organismsDiffer>
    <experiments>14</experiments>
</comment>
<comment type="interaction">
    <interactant intactId="EBI-80140">
        <id>P63165</id>
    </interactant>
    <interactant intactId="EBI-10180829">
        <id>Q7KZS0</id>
        <label>UBE2I</label>
    </interactant>
    <organismsDiffer>false</organismsDiffer>
    <experiments>6</experiments>
</comment>
<comment type="interaction">
    <interactant intactId="EBI-80140">
        <id>P63165</id>
    </interactant>
    <interactant intactId="EBI-2513899">
        <id>Q5W0Q7</id>
        <label>USPL1</label>
    </interactant>
    <organismsDiffer>false</organismsDiffer>
    <experiments>5</experiments>
</comment>
<comment type="interaction">
    <interactant intactId="EBI-80140">
        <id>P63165</id>
    </interactant>
    <interactant intactId="EBI-2515601">
        <id>Q8N680</id>
        <label>ZBTB2</label>
    </interactant>
    <organismsDiffer>false</organismsDiffer>
    <experiments>3</experiments>
</comment>
<comment type="interaction">
    <interactant intactId="EBI-80140">
        <id>P63165</id>
    </interactant>
    <interactant intactId="EBI-3918996">
        <id>Q9HCK0</id>
        <label>ZBTB26</label>
    </interactant>
    <organismsDiffer>false</organismsDiffer>
    <experiments>8</experiments>
</comment>
<comment type="interaction">
    <interactant intactId="EBI-80140">
        <id>P63165</id>
    </interactant>
    <interactant intactId="EBI-7227791">
        <id>Q15916</id>
        <label>ZBTB6</label>
    </interactant>
    <organismsDiffer>false</organismsDiffer>
    <experiments>3</experiments>
</comment>
<comment type="interaction">
    <interactant intactId="EBI-80140">
        <id>P63165</id>
    </interactant>
    <interactant intactId="EBI-748373">
        <id>Q6PEW1</id>
        <label>ZCCHC12</label>
    </interactant>
    <organismsDiffer>false</organismsDiffer>
    <experiments>6</experiments>
</comment>
<comment type="interaction">
    <interactant intactId="EBI-80140">
        <id>P63165</id>
    </interactant>
    <interactant intactId="EBI-7265024">
        <id>Q8N3Z6</id>
        <label>ZCCHC7</label>
    </interactant>
    <organismsDiffer>false</organismsDiffer>
    <experiments>3</experiments>
</comment>
<comment type="interaction">
    <interactant intactId="EBI-80140">
        <id>P63165</id>
    </interactant>
    <interactant intactId="EBI-12151755">
        <id>Q96MM3</id>
        <label>ZFP42</label>
    </interactant>
    <organismsDiffer>false</organismsDiffer>
    <experiments>3</experiments>
</comment>
<comment type="interaction">
    <interactant intactId="EBI-80140">
        <id>P63165</id>
    </interactant>
    <interactant intactId="EBI-7228860">
        <id>Q9UJ78</id>
        <label>ZMYM5</label>
    </interactant>
    <organismsDiffer>false</organismsDiffer>
    <experiments>3</experiments>
</comment>
<comment type="interaction">
    <interactant intactId="EBI-80140">
        <id>P63165</id>
    </interactant>
    <interactant intactId="EBI-10243413">
        <id>Q59GP6</id>
    </interactant>
    <organismsDiffer>false</organismsDiffer>
    <experiments>3</experiments>
</comment>
<comment type="interaction">
    <interactant intactId="EBI-80140">
        <id>P63165</id>
    </interactant>
    <interactant intactId="EBI-7000804">
        <id>Q60636</id>
        <label>Prdm1</label>
    </interactant>
    <organismsDiffer>true</organismsDiffer>
    <experiments>3</experiments>
</comment>
<comment type="subcellular location">
    <subcellularLocation>
        <location evidence="3 5">Nucleus membrane</location>
    </subcellularLocation>
    <subcellularLocation>
        <location evidence="1">Nucleus speckle</location>
    </subcellularLocation>
    <subcellularLocation>
        <location evidence="5 34">Cytoplasm</location>
    </subcellularLocation>
    <subcellularLocation>
        <location evidence="3 5 29">Nucleus</location>
        <location evidence="3 5 29">PML body</location>
    </subcellularLocation>
    <subcellularLocation>
        <location evidence="24">Cell membrane</location>
    </subcellularLocation>
    <subcellularLocation>
        <location evidence="31 34">Nucleus</location>
    </subcellularLocation>
    <text evidence="1 31">Recruited by BCL11A into the nuclear body (By similarity). In the presence of ZFHX3, sequesterd to nuclear body (NB)-like dots in the nucleus some of which overlap or closely associate with PML body (PubMed:24651376).</text>
</comment>
<comment type="alternative products">
    <event type="alternative splicing"/>
    <isoform>
        <id>P63165-1</id>
        <name>1</name>
        <sequence type="displayed"/>
    </isoform>
    <isoform>
        <id>P63165-2</id>
        <name>2</name>
        <sequence type="described" ref="VSP_046756"/>
    </isoform>
</comment>
<comment type="PTM">
    <text evidence="11">Cleavage of precursor form by SENP1 or SENP2 is necessary for function.</text>
</comment>
<comment type="PTM">
    <text evidence="21">Polymeric SUMO1 chains undergo polyubiquitination by RNF4.</text>
</comment>
<comment type="disease" evidence="18">
    <disease id="DI-02972">
        <name>Non-syndromic orofacial cleft 10</name>
        <acronym>OFC10</acronym>
        <description>A birth defect consisting of cleft lips with or without cleft palate. Cleft lips are associated with cleft palate in two-third of cases. A cleft lip can occur on one or both sides and range in severity from a simple notch in the upper lip to a complete opening in the lip extending into the floor of the nostril and involving the upper gum.</description>
        <dbReference type="MIM" id="613705"/>
    </disease>
    <text>The disease is caused by variants affecting the gene represented in this entry. A chromosomal aberration involving SUMO1 is the cause of OFC10. Translocation t(2;8)(q33.1;q24.3). The breakpoint occurred in the SUMO1 gene and resulted in haploinsufficiency confirmed by protein assays.</text>
</comment>
<comment type="similarity">
    <text evidence="35">Belongs to the ubiquitin family. SUMO subfamily.</text>
</comment>
<comment type="online information" name="Wikipedia">
    <link uri="https://en.wikipedia.org/wiki/SUMO_protein"/>
    <text>SUMO protein entry</text>
</comment>
<gene>
    <name type="primary">SUMO1</name>
    <name type="synonym">SMT3C</name>
    <name type="synonym">SMT3H3</name>
    <name type="synonym">UBL1</name>
    <name type="ORF">OK/SW-cl.43</name>
</gene>